<organism>
    <name type="scientific">Rattus norvegicus</name>
    <name type="common">Rat</name>
    <dbReference type="NCBI Taxonomy" id="10116"/>
    <lineage>
        <taxon>Eukaryota</taxon>
        <taxon>Metazoa</taxon>
        <taxon>Chordata</taxon>
        <taxon>Craniata</taxon>
        <taxon>Vertebrata</taxon>
        <taxon>Euteleostomi</taxon>
        <taxon>Mammalia</taxon>
        <taxon>Eutheria</taxon>
        <taxon>Euarchontoglires</taxon>
        <taxon>Glires</taxon>
        <taxon>Rodentia</taxon>
        <taxon>Myomorpha</taxon>
        <taxon>Muroidea</taxon>
        <taxon>Muridae</taxon>
        <taxon>Murinae</taxon>
        <taxon>Rattus</taxon>
    </lineage>
</organism>
<sequence length="887" mass="101576">MARQGCLGSFQVISLFTFAISVNICLGFTASRIKRAEWDEGPPTVLSDSPWTNTSGSCKGRCFELQEVGPPDCRCDNLCKSYSSCCHDFDELCLKTARGWECTKDRCGEVRNEENACHCSEDCLSRGDCCTNYQVVCKGESHWVDDDCEEIKVPECPAGFVRPPLIIFSVDGFRASYMKKGSKVMPNIEKLRSCGTHAPYMRPVYPTKTFPNLYTLATGLYPESHGIVGNSMYDPVFDASFHLRGREKFNHRWWGGQPLWITATKQGVRAGTFFWSVSIPHERRILTILQWLSLPDNERPSVYAFYSEQPDFSGHKYGPFGPEMTNPLREIDKTVGQLMDGLKQLRLHRCVNVIFVGDHGMEDVTCDRTEFLSNYLTNVDDITLVPGTLGRIRAKSINNSKYDPKTIIANLTCKKPDQHFKPYMKQHLPKRLHYANNRRIEDIHLLVDRRWHVARKPLDVYKKPSGKCFFQGDHGFDNKVNSMQTVFVGYGPTFKYRTKVPPFENIELYNVMCDLLGLKPAPNNGTHGSLNHLLRTNTFRPTMPDEVSRPNYPGIMYLQSEFDLGCTCDDKVEPKNKLEELNKRLHTKGSTEAETGKFRGSKHENKKNLNGSVEPRKERHLLYGRPAVLYRTSYDILYHTDFESGYSEIFLMPLWTSYTISKQAEVSSIPEHLTNCVRPDVRVSPGFSQNCLAYKNDKQMSYGFLFPPYLSSSPEAKYDAFLVTNMVPMYPAFKRVWAYFQRVLVKKYASERNGVNVISGPIFDYNYDGLRDTEDEIKQYVEGSSIPVPTHYYSIITSCLDFTQPADKCDGPLSVSSFILPHRPDNDESCNSSEDESKWVEELMKMHTARVRDIEHLTGLDFYRKTSRSYSEILTLKTYLHTYESEI</sequence>
<protein>
    <recommendedName>
        <fullName evidence="20">Autotaxin</fullName>
        <ecNumber evidence="6 9 12 13 14 15 16">3.1.4.39</ecNumber>
        <ecNumber evidence="1">3.1.4.4</ecNumber>
    </recommendedName>
    <alternativeName>
        <fullName evidence="24">Ectonucleotide pyrophosphatase/phosphodiesterase family member 2</fullName>
        <shortName>E-NPP 2</shortName>
    </alternativeName>
    <alternativeName>
        <fullName>Extracellular lysophospholipase D</fullName>
        <shortName evidence="18 19">LysoPLD</shortName>
    </alternativeName>
</protein>
<feature type="signal peptide" evidence="10 11">
    <location>
        <begin position="1"/>
        <end position="27"/>
    </location>
</feature>
<feature type="propeptide" id="PRO_0000281651" description="Removed by furin" evidence="10 11">
    <location>
        <begin position="28"/>
        <end position="35"/>
    </location>
</feature>
<feature type="chain" id="PRO_0000188569" description="Autotaxin">
    <location>
        <begin position="36"/>
        <end position="887"/>
    </location>
</feature>
<feature type="domain" description="SMB 1" evidence="4">
    <location>
        <begin position="54"/>
        <end position="97"/>
    </location>
</feature>
<feature type="domain" description="SMB 2" evidence="4">
    <location>
        <begin position="98"/>
        <end position="142"/>
    </location>
</feature>
<feature type="region of interest" description="Phosphodiesterase" evidence="2">
    <location>
        <begin position="144"/>
        <end position="501"/>
    </location>
</feature>
<feature type="region of interest" description="Disordered" evidence="5">
    <location>
        <begin position="586"/>
        <end position="615"/>
    </location>
</feature>
<feature type="region of interest" description="Nuclease-like domain" evidence="2">
    <location>
        <begin position="622"/>
        <end position="887"/>
    </location>
</feature>
<feature type="region of interest" description="Required for secretion" evidence="2">
    <location>
        <begin position="854"/>
        <end position="875"/>
    </location>
</feature>
<feature type="short sequence motif" description="Cell attachment site" evidence="3">
    <location>
        <begin position="126"/>
        <end position="128"/>
    </location>
</feature>
<feature type="compositionally biased region" description="Basic and acidic residues" evidence="5">
    <location>
        <begin position="586"/>
        <end position="607"/>
    </location>
</feature>
<feature type="active site" description="Nucleophile" evidence="9 14">
    <location>
        <position position="209"/>
    </location>
</feature>
<feature type="binding site" evidence="12 13 14 15 25 26 27 28 29 30 31 32 33 34 35">
    <location>
        <position position="171"/>
    </location>
    <ligand>
        <name>Zn(2+)</name>
        <dbReference type="ChEBI" id="CHEBI:29105"/>
        <label>1</label>
        <note>catalytic</note>
    </ligand>
</feature>
<feature type="binding site" evidence="29">
    <location>
        <position position="209"/>
    </location>
    <ligand>
        <name>1-(9Z-octadecenoyl)-sn-glycero-3-phosphate</name>
        <dbReference type="ChEBI" id="CHEBI:74544"/>
    </ligand>
</feature>
<feature type="binding site" evidence="2">
    <location>
        <position position="209"/>
    </location>
    <ligand>
        <name>1-hexadecanoyl-sn-glycero-3-phosphate</name>
        <dbReference type="ChEBI" id="CHEBI:57518"/>
    </ligand>
</feature>
<feature type="binding site" evidence="2">
    <location>
        <position position="209"/>
    </location>
    <ligand>
        <name>1-tetradecanoyl-sn-glycerol 3-phosphate</name>
        <dbReference type="ChEBI" id="CHEBI:72683"/>
    </ligand>
</feature>
<feature type="binding site" evidence="12 13 14 15 25 26 27 28 29 30 31 32 33 34 35">
    <location>
        <position position="209"/>
    </location>
    <ligand>
        <name>Zn(2+)</name>
        <dbReference type="ChEBI" id="CHEBI:29105"/>
        <label>1</label>
        <note>catalytic</note>
    </ligand>
</feature>
<feature type="binding site" evidence="29">
    <location>
        <position position="230"/>
    </location>
    <ligand>
        <name>1-(9Z-octadecenoyl)-sn-glycero-3-phosphate</name>
        <dbReference type="ChEBI" id="CHEBI:74544"/>
    </ligand>
</feature>
<feature type="binding site" evidence="2">
    <location>
        <position position="230"/>
    </location>
    <ligand>
        <name>1-hexadecanoyl-sn-glycero-3-phosphate</name>
        <dbReference type="ChEBI" id="CHEBI:57518"/>
    </ligand>
</feature>
<feature type="binding site" evidence="2">
    <location>
        <position position="230"/>
    </location>
    <ligand>
        <name>1-tetradecanoyl-sn-glycerol 3-phosphate</name>
        <dbReference type="ChEBI" id="CHEBI:72683"/>
    </ligand>
</feature>
<feature type="binding site" evidence="2">
    <location>
        <position position="311"/>
    </location>
    <ligand>
        <name>1-(9Z-octadecenoyl)-sn-glycero-3-phosphate</name>
        <dbReference type="ChEBI" id="CHEBI:74544"/>
    </ligand>
</feature>
<feature type="binding site" evidence="2">
    <location>
        <position position="311"/>
    </location>
    <ligand>
        <name>1-hexadecanoyl-sn-glycero-3-phosphate</name>
        <dbReference type="ChEBI" id="CHEBI:57518"/>
    </ligand>
</feature>
<feature type="binding site" evidence="2">
    <location>
        <position position="311"/>
    </location>
    <ligand>
        <name>1-tetradecanoyl-sn-glycerol 3-phosphate</name>
        <dbReference type="ChEBI" id="CHEBI:72683"/>
    </ligand>
</feature>
<feature type="binding site" evidence="12 13 14 15 25 26 27 28 29 30 31 32 33 34 35">
    <location>
        <position position="311"/>
    </location>
    <ligand>
        <name>Zn(2+)</name>
        <dbReference type="ChEBI" id="CHEBI:29105"/>
        <label>2</label>
        <note>catalytic</note>
    </ligand>
</feature>
<feature type="binding site" evidence="12 13 14 15 25 26 27 28 29 30 31 32 33 34 35">
    <location>
        <position position="315"/>
    </location>
    <ligand>
        <name>Zn(2+)</name>
        <dbReference type="ChEBI" id="CHEBI:29105"/>
        <label>2</label>
        <note>catalytic</note>
    </ligand>
</feature>
<feature type="binding site" evidence="12 13 14 15 26 27 28 31 32 33 34 35">
    <location>
        <position position="358"/>
    </location>
    <ligand>
        <name>Zn(2+)</name>
        <dbReference type="ChEBI" id="CHEBI:29105"/>
        <label>1</label>
        <note>catalytic</note>
    </ligand>
</feature>
<feature type="binding site" evidence="12 13 14 15 25 26 27 28 29 30 31 32 33 34 35">
    <location>
        <position position="359"/>
    </location>
    <ligand>
        <name>Zn(2+)</name>
        <dbReference type="ChEBI" id="CHEBI:29105"/>
        <label>1</label>
        <note>catalytic</note>
    </ligand>
</feature>
<feature type="binding site" evidence="2">
    <location>
        <position position="474"/>
    </location>
    <ligand>
        <name>1-(9Z-octadecenoyl)-sn-glycero-3-phosphate</name>
        <dbReference type="ChEBI" id="CHEBI:74544"/>
    </ligand>
</feature>
<feature type="binding site" evidence="2">
    <location>
        <position position="474"/>
    </location>
    <ligand>
        <name>1-hexadecanoyl-sn-glycero-3-phosphate</name>
        <dbReference type="ChEBI" id="CHEBI:57518"/>
    </ligand>
</feature>
<feature type="binding site" evidence="2">
    <location>
        <position position="474"/>
    </location>
    <ligand>
        <name>1-tetradecanoyl-sn-glycerol 3-phosphate</name>
        <dbReference type="ChEBI" id="CHEBI:72683"/>
    </ligand>
</feature>
<feature type="binding site" evidence="12 13 14 15 25 26 27 28 29 30 31 32 33 34 35">
    <location>
        <position position="474"/>
    </location>
    <ligand>
        <name>Zn(2+)</name>
        <dbReference type="ChEBI" id="CHEBI:29105"/>
        <label>2</label>
        <note>catalytic</note>
    </ligand>
</feature>
<feature type="binding site" evidence="12 13 14 25 26 27 28 29 30 34 35">
    <location>
        <position position="764"/>
    </location>
    <ligand>
        <name>Ca(2+)</name>
        <dbReference type="ChEBI" id="CHEBI:29108"/>
    </ligand>
</feature>
<feature type="binding site" evidence="12 13 14 25 26 27 28 29 30 31 34 35">
    <location>
        <position position="766"/>
    </location>
    <ligand>
        <name>Ca(2+)</name>
        <dbReference type="ChEBI" id="CHEBI:29108"/>
    </ligand>
</feature>
<feature type="binding site" evidence="12 13 14 25 26 27 28 29 30 31 34 35">
    <location>
        <position position="768"/>
    </location>
    <ligand>
        <name>Ca(2+)</name>
        <dbReference type="ChEBI" id="CHEBI:29108"/>
    </ligand>
</feature>
<feature type="binding site" evidence="12 13 14 25 26 27 28 29 30 31 34">
    <location>
        <position position="770"/>
    </location>
    <ligand>
        <name>Ca(2+)</name>
        <dbReference type="ChEBI" id="CHEBI:29108"/>
    </ligand>
</feature>
<feature type="binding site" evidence="12 13 14 25 26 27 28 29 30 31 34 35">
    <location>
        <position position="772"/>
    </location>
    <ligand>
        <name>Ca(2+)</name>
        <dbReference type="ChEBI" id="CHEBI:29108"/>
    </ligand>
</feature>
<feature type="site" description="Essential for catalytic activity" evidence="2">
    <location>
        <position position="877"/>
    </location>
</feature>
<feature type="glycosylation site" description="N-linked (GlcNAc...) asparagine" evidence="3">
    <location>
        <position position="53"/>
    </location>
</feature>
<feature type="glycosylation site" description="N-linked (GlcNAc...) asparagine" evidence="3">
    <location>
        <position position="398"/>
    </location>
</feature>
<feature type="glycosylation site" description="N-linked (GlcNAc...) asparagine" evidence="3">
    <location>
        <position position="410"/>
    </location>
</feature>
<feature type="glycosylation site" description="N-linked (GlcNAc...) asparagine" evidence="12">
    <location>
        <position position="524"/>
    </location>
</feature>
<feature type="glycosylation site" description="N-linked (GlcNAc...) asparagine" evidence="3">
    <location>
        <position position="610"/>
    </location>
</feature>
<feature type="glycosylation site" description="N-linked (GlcNAc...) asparagine" evidence="3">
    <location>
        <position position="831"/>
    </location>
</feature>
<feature type="disulfide bond" evidence="4 12">
    <location>
        <begin position="58"/>
        <end position="75"/>
    </location>
</feature>
<feature type="disulfide bond" evidence="4 12">
    <location>
        <begin position="62"/>
        <end position="93"/>
    </location>
</feature>
<feature type="disulfide bond" evidence="4 12">
    <location>
        <begin position="73"/>
        <end position="86"/>
    </location>
</feature>
<feature type="disulfide bond" evidence="4 12">
    <location>
        <begin position="79"/>
        <end position="85"/>
    </location>
</feature>
<feature type="disulfide bond" evidence="4 12">
    <location>
        <begin position="102"/>
        <end position="119"/>
    </location>
</feature>
<feature type="disulfide bond" evidence="4 12">
    <location>
        <begin position="107"/>
        <end position="137"/>
    </location>
</feature>
<feature type="disulfide bond" evidence="4 12">
    <location>
        <begin position="117"/>
        <end position="130"/>
    </location>
</feature>
<feature type="disulfide bond" evidence="4 12">
    <location>
        <begin position="123"/>
        <end position="129"/>
    </location>
</feature>
<feature type="disulfide bond" evidence="4 12">
    <location>
        <begin position="148"/>
        <end position="194"/>
    </location>
</feature>
<feature type="disulfide bond" evidence="4 12">
    <location>
        <begin position="156"/>
        <end position="350"/>
    </location>
</feature>
<feature type="disulfide bond" evidence="4 12">
    <location>
        <begin position="366"/>
        <end position="468"/>
    </location>
</feature>
<feature type="disulfide bond" evidence="4 12">
    <location>
        <begin position="413"/>
        <end position="830"/>
    </location>
</feature>
<feature type="disulfide bond" evidence="4 12">
    <location>
        <begin position="566"/>
        <end position="691"/>
    </location>
</feature>
<feature type="disulfide bond" evidence="4 12">
    <location>
        <begin position="568"/>
        <end position="676"/>
    </location>
</feature>
<feature type="disulfide bond" evidence="4 12">
    <location>
        <begin position="799"/>
        <end position="809"/>
    </location>
</feature>
<feature type="splice variant" id="VSP_024018" description="In isoform 2." evidence="20">
    <location>
        <begin position="591"/>
        <end position="615"/>
    </location>
</feature>
<feature type="mutagenesis site" description="No effect on secretion." evidence="10">
    <original>I</original>
    <variation>L</variation>
    <location>
        <position position="13"/>
    </location>
</feature>
<feature type="mutagenesis site" description="No effect on secretion." evidence="10">
    <original>FTF</original>
    <variation>VLS</variation>
    <location>
        <begin position="16"/>
        <end position="18"/>
    </location>
</feature>
<feature type="mutagenesis site" description="No effect on secretion." evidence="10">
    <original>FAIS</original>
    <variation>SVCV</variation>
    <location>
        <begin position="18"/>
        <end position="21"/>
    </location>
</feature>
<feature type="mutagenesis site" description="No effect on secretion." evidence="10">
    <original>SVNI</original>
    <variation>VLTT</variation>
    <location>
        <begin position="21"/>
        <end position="24"/>
    </location>
</feature>
<feature type="mutagenesis site" description="No effect on secretion." evidence="10">
    <original>IC</original>
    <variation>TI</variation>
    <location>
        <begin position="24"/>
        <end position="25"/>
    </location>
</feature>
<feature type="mutagenesis site" description="No effect on secretion." evidence="10">
    <original>FTA</original>
    <variation>CIF</variation>
    <location>
        <begin position="28"/>
        <end position="30"/>
    </location>
</feature>
<feature type="mutagenesis site" description="Abolishes lysophospholipase D activity." evidence="9">
    <original>D</original>
    <variation>N</variation>
    <location>
        <position position="171"/>
    </location>
</feature>
<feature type="mutagenesis site" description="Abolishes lysophospholipase D activity." evidence="9">
    <original>T</original>
    <variation>A</variation>
    <location>
        <position position="209"/>
    </location>
</feature>
<feature type="mutagenesis site" description="15% of wild-type lysophospholipase D activity." evidence="9">
    <original>T</original>
    <variation>S</variation>
    <location>
        <position position="209"/>
    </location>
</feature>
<feature type="mutagenesis site" description="Abolishes lysophospholipase D activity." evidence="9">
    <original>D</original>
    <variation>N</variation>
    <location>
        <position position="311"/>
    </location>
</feature>
<feature type="mutagenesis site" description="20% of wild-type lysophospholipase D activity." evidence="9">
    <original>H</original>
    <variation>Q</variation>
    <location>
        <position position="315"/>
    </location>
</feature>
<feature type="mutagenesis site" description="Impaired secretion. No effect on lysophospholipase activity." evidence="12">
    <original>K</original>
    <variation>A</variation>
    <location>
        <position position="430"/>
    </location>
</feature>
<feature type="mutagenesis site" description="Abolishes secretion. Strongly reduced lysophospholipase activity." evidence="12">
    <original>DYNYD</original>
    <variation>SYAYS</variation>
    <location>
        <begin position="764"/>
        <end position="768"/>
    </location>
</feature>
<feature type="sequence conflict" description="In Ref. 1; BAA05910." evidence="21" ref="1">
    <original>A</original>
    <variation>V</variation>
    <location>
        <position position="97"/>
    </location>
</feature>
<feature type="sequence conflict" description="In Ref. 1; BAA05910." evidence="21" ref="1">
    <original>C</original>
    <variation>S</variation>
    <location>
        <position position="107"/>
    </location>
</feature>
<feature type="sequence conflict" description="In Ref. 1; BAA05910." evidence="21" ref="1">
    <original>S</original>
    <variation>P</variation>
    <location>
        <position position="120"/>
    </location>
</feature>
<feature type="sequence conflict" description="In Ref. 1; BAA05910." evidence="21" ref="1">
    <original>DCEEIKVPECPAGFVR</original>
    <variation>AARNQSSECLQVCP</variation>
    <location>
        <begin position="147"/>
        <end position="162"/>
    </location>
</feature>
<feature type="sequence conflict" description="In Ref. 1; BAA05910." evidence="21" ref="1">
    <original>A</original>
    <variation>V</variation>
    <location>
        <position position="198"/>
    </location>
</feature>
<feature type="sequence conflict" description="In Ref. 1; BAA05910." evidence="21" ref="1">
    <original>M</original>
    <variation>T</variation>
    <location>
        <position position="201"/>
    </location>
</feature>
<feature type="turn" evidence="36">
    <location>
        <begin position="59"/>
        <end position="63"/>
    </location>
</feature>
<feature type="strand" evidence="42">
    <location>
        <begin position="69"/>
        <end position="72"/>
    </location>
</feature>
<feature type="turn" evidence="36">
    <location>
        <begin position="77"/>
        <end position="83"/>
    </location>
</feature>
<feature type="helix" evidence="36">
    <location>
        <begin position="89"/>
        <end position="92"/>
    </location>
</feature>
<feature type="turn" evidence="36">
    <location>
        <begin position="98"/>
        <end position="100"/>
    </location>
</feature>
<feature type="helix" evidence="36">
    <location>
        <begin position="104"/>
        <end position="106"/>
    </location>
</feature>
<feature type="strand" evidence="38">
    <location>
        <begin position="107"/>
        <end position="109"/>
    </location>
</feature>
<feature type="strand" evidence="36">
    <location>
        <begin position="115"/>
        <end position="118"/>
    </location>
</feature>
<feature type="helix" evidence="36">
    <location>
        <begin position="123"/>
        <end position="126"/>
    </location>
</feature>
<feature type="helix" evidence="36">
    <location>
        <begin position="133"/>
        <end position="137"/>
    </location>
</feature>
<feature type="helix" evidence="36">
    <location>
        <begin position="143"/>
        <end position="145"/>
    </location>
</feature>
<feature type="strand" evidence="36">
    <location>
        <begin position="165"/>
        <end position="171"/>
    </location>
</feature>
<feature type="helix" evidence="36">
    <location>
        <begin position="175"/>
        <end position="180"/>
    </location>
</feature>
<feature type="turn" evidence="36">
    <location>
        <begin position="182"/>
        <end position="184"/>
    </location>
</feature>
<feature type="helix" evidence="36">
    <location>
        <begin position="186"/>
        <end position="194"/>
    </location>
</feature>
<feature type="strand" evidence="36">
    <location>
        <begin position="195"/>
        <end position="197"/>
    </location>
</feature>
<feature type="helix" evidence="36">
    <location>
        <begin position="209"/>
        <end position="218"/>
    </location>
</feature>
<feature type="helix" evidence="36">
    <location>
        <begin position="222"/>
        <end position="225"/>
    </location>
</feature>
<feature type="strand" evidence="36">
    <location>
        <begin position="230"/>
        <end position="234"/>
    </location>
</feature>
<feature type="turn" evidence="36">
    <location>
        <begin position="235"/>
        <end position="238"/>
    </location>
</feature>
<feature type="strand" evidence="36">
    <location>
        <begin position="239"/>
        <end position="241"/>
    </location>
</feature>
<feature type="strand" evidence="36">
    <location>
        <begin position="243"/>
        <end position="246"/>
    </location>
</feature>
<feature type="helix" evidence="36">
    <location>
        <begin position="247"/>
        <end position="249"/>
    </location>
</feature>
<feature type="helix" evidence="36">
    <location>
        <begin position="251"/>
        <end position="253"/>
    </location>
</feature>
<feature type="helix" evidence="36">
    <location>
        <begin position="259"/>
        <end position="265"/>
    </location>
</feature>
<feature type="helix" evidence="36">
    <location>
        <begin position="281"/>
        <end position="292"/>
    </location>
</feature>
<feature type="turn" evidence="36">
    <location>
        <begin position="296"/>
        <end position="298"/>
    </location>
</feature>
<feature type="strand" evidence="36">
    <location>
        <begin position="301"/>
        <end position="310"/>
    </location>
</feature>
<feature type="helix" evidence="36">
    <location>
        <begin position="311"/>
        <end position="317"/>
    </location>
</feature>
<feature type="strand" evidence="41">
    <location>
        <begin position="319"/>
        <end position="321"/>
    </location>
</feature>
<feature type="helix" evidence="36">
    <location>
        <begin position="322"/>
        <end position="324"/>
    </location>
</feature>
<feature type="helix" evidence="36">
    <location>
        <begin position="325"/>
        <end position="344"/>
    </location>
</feature>
<feature type="turn" evidence="36">
    <location>
        <begin position="348"/>
        <end position="350"/>
    </location>
</feature>
<feature type="strand" evidence="36">
    <location>
        <begin position="352"/>
        <end position="358"/>
    </location>
</feature>
<feature type="strand" evidence="36">
    <location>
        <begin position="368"/>
        <end position="371"/>
    </location>
</feature>
<feature type="helix" evidence="36">
    <location>
        <begin position="372"/>
        <end position="374"/>
    </location>
</feature>
<feature type="helix" evidence="36">
    <location>
        <begin position="379"/>
        <end position="381"/>
    </location>
</feature>
<feature type="strand" evidence="36">
    <location>
        <begin position="382"/>
        <end position="385"/>
    </location>
</feature>
<feature type="strand" evidence="36">
    <location>
        <begin position="387"/>
        <end position="395"/>
    </location>
</feature>
<feature type="strand" evidence="37">
    <location>
        <begin position="396"/>
        <end position="398"/>
    </location>
</feature>
<feature type="helix" evidence="36">
    <location>
        <begin position="404"/>
        <end position="410"/>
    </location>
</feature>
<feature type="strand" evidence="36">
    <location>
        <begin position="419"/>
        <end position="424"/>
    </location>
</feature>
<feature type="helix" evidence="36">
    <location>
        <begin position="425"/>
        <end position="427"/>
    </location>
</feature>
<feature type="helix" evidence="36">
    <location>
        <begin position="430"/>
        <end position="432"/>
    </location>
</feature>
<feature type="strand" evidence="36">
    <location>
        <begin position="442"/>
        <end position="447"/>
    </location>
</feature>
<feature type="strand" evidence="36">
    <location>
        <begin position="452"/>
        <end position="456"/>
    </location>
</feature>
<feature type="helix" evidence="41">
    <location>
        <begin position="457"/>
        <end position="459"/>
    </location>
</feature>
<feature type="strand" evidence="39">
    <location>
        <begin position="462"/>
        <end position="465"/>
    </location>
</feature>
<feature type="strand" evidence="40">
    <location>
        <begin position="466"/>
        <end position="469"/>
    </location>
</feature>
<feature type="strand" evidence="41">
    <location>
        <begin position="471"/>
        <end position="473"/>
    </location>
</feature>
<feature type="helix" evidence="36">
    <location>
        <begin position="481"/>
        <end position="483"/>
    </location>
</feature>
<feature type="strand" evidence="36">
    <location>
        <begin position="487"/>
        <end position="494"/>
    </location>
</feature>
<feature type="strand" evidence="36">
    <location>
        <begin position="496"/>
        <end position="499"/>
    </location>
</feature>
<feature type="helix" evidence="36">
    <location>
        <begin position="505"/>
        <end position="507"/>
    </location>
</feature>
<feature type="helix" evidence="36">
    <location>
        <begin position="508"/>
        <end position="515"/>
    </location>
</feature>
<feature type="turn" evidence="36">
    <location>
        <begin position="527"/>
        <end position="530"/>
    </location>
</feature>
<feature type="helix" evidence="36">
    <location>
        <begin position="531"/>
        <end position="533"/>
    </location>
</feature>
<feature type="strand" evidence="36">
    <location>
        <begin position="534"/>
        <end position="536"/>
    </location>
</feature>
<feature type="helix" evidence="36">
    <location>
        <begin position="559"/>
        <end position="561"/>
    </location>
</feature>
<feature type="helix" evidence="36">
    <location>
        <begin position="577"/>
        <end position="581"/>
    </location>
</feature>
<feature type="turn" evidence="36">
    <location>
        <begin position="583"/>
        <end position="586"/>
    </location>
</feature>
<feature type="turn" evidence="39">
    <location>
        <begin position="588"/>
        <end position="590"/>
    </location>
</feature>
<feature type="helix" evidence="36">
    <location>
        <begin position="617"/>
        <end position="620"/>
    </location>
</feature>
<feature type="strand" evidence="36">
    <location>
        <begin position="634"/>
        <end position="638"/>
    </location>
</feature>
<feature type="strand" evidence="36">
    <location>
        <begin position="643"/>
        <end position="647"/>
    </location>
</feature>
<feature type="turn" evidence="36">
    <location>
        <begin position="648"/>
        <end position="651"/>
    </location>
</feature>
<feature type="strand" evidence="36">
    <location>
        <begin position="652"/>
        <end position="660"/>
    </location>
</feature>
<feature type="helix" evidence="36">
    <location>
        <begin position="671"/>
        <end position="673"/>
    </location>
</feature>
<feature type="helix" evidence="36">
    <location>
        <begin position="685"/>
        <end position="687"/>
    </location>
</feature>
<feature type="helix" evidence="36">
    <location>
        <begin position="691"/>
        <end position="696"/>
    </location>
</feature>
<feature type="strand" evidence="36">
    <location>
        <begin position="701"/>
        <end position="706"/>
    </location>
</feature>
<feature type="helix" evidence="36">
    <location>
        <begin position="708"/>
        <end position="710"/>
    </location>
</feature>
<feature type="helix" evidence="36">
    <location>
        <begin position="714"/>
        <end position="717"/>
    </location>
</feature>
<feature type="helix" evidence="36">
    <location>
        <begin position="718"/>
        <end position="721"/>
    </location>
</feature>
<feature type="helix" evidence="36">
    <location>
        <begin position="723"/>
        <end position="725"/>
    </location>
</feature>
<feature type="strand" evidence="36">
    <location>
        <begin position="726"/>
        <end position="729"/>
    </location>
</feature>
<feature type="helix" evidence="36">
    <location>
        <begin position="731"/>
        <end position="742"/>
    </location>
</feature>
<feature type="helix" evidence="36">
    <location>
        <begin position="744"/>
        <end position="752"/>
    </location>
</feature>
<feature type="strand" evidence="36">
    <location>
        <begin position="754"/>
        <end position="762"/>
    </location>
</feature>
<feature type="strand" evidence="36">
    <location>
        <begin position="768"/>
        <end position="770"/>
    </location>
</feature>
<feature type="helix" evidence="36">
    <location>
        <begin position="774"/>
        <end position="776"/>
    </location>
</feature>
<feature type="strand" evidence="36">
    <location>
        <begin position="790"/>
        <end position="801"/>
    </location>
</feature>
<feature type="helix" evidence="36">
    <location>
        <begin position="806"/>
        <end position="808"/>
    </location>
</feature>
<feature type="strand" evidence="36">
    <location>
        <begin position="813"/>
        <end position="821"/>
    </location>
</feature>
<feature type="turn" evidence="36">
    <location>
        <begin position="830"/>
        <end position="833"/>
    </location>
</feature>
<feature type="helix" evidence="36">
    <location>
        <begin position="836"/>
        <end position="838"/>
    </location>
</feature>
<feature type="helix" evidence="36">
    <location>
        <begin position="840"/>
        <end position="846"/>
    </location>
</feature>
<feature type="helix" evidence="36">
    <location>
        <begin position="851"/>
        <end position="858"/>
    </location>
</feature>
<feature type="strand" evidence="40">
    <location>
        <begin position="859"/>
        <end position="861"/>
    </location>
</feature>
<feature type="strand" evidence="41">
    <location>
        <begin position="865"/>
        <end position="868"/>
    </location>
</feature>
<feature type="helix" evidence="36">
    <location>
        <begin position="870"/>
        <end position="878"/>
    </location>
</feature>
<name>ENPP2_RAT</name>
<comment type="function">
    <text evidence="1 6 7 8 9 10 13 14 15 16">Secreted lysophospholipase D that hydrolyzes lysophospholipids to produce the signaling molecule lysophosphatidic acid (LPA) in extracellular fluids (PubMed:12354767, PubMed:12633853, PubMed:27075612, PubMed:27268273, PubMed:27660691, PubMed:29259743). Its major substrate is lysophosphatidylcholine (PubMed:12119361, PubMed:12176993, PubMed:27075612, PubMed:27268273, PubMed:27660691). Can also act on sphingosylphosphorylcholine producing sphingosine-1-phosphate, a modulator of cell motility (PubMed:12119361). Can hydrolyze, in vitro, bis-pNPP, to some extent pNP-TMP, and barely ATP (PubMed:12633853, PubMed:27268273). Involved in several motility-related processes such as angiogenesis and neurite outgrowth. Acts as an angiogenic factor by stimulating migration of smooth muscle cells and microtubule formation. Stimulates migration of melanoma cells, probably via a pertussis toxin-sensitive G protein. May have a role in induction of parturition. Possible involvement in cell proliferation and adipose tissue development (By similarity). Required for LPA production in activated platelets, cleaves the sn-1 lysophospholipids to generate sn-1 lysophosphatidic acids containing predominantly 18:2 and 20:4 fatty acids (By similarity). Shows a preference for the sn-1 to the sn-2 isomer of 1-O-alkyl-sn-glycero-3-phosphocholine (lyso-PAF) (By similarity).</text>
</comment>
<comment type="catalytic activity">
    <reaction evidence="6 9 12 13 14 15 16">
        <text>a 1-O-alkyl-sn-glycero-3-phosphoethanolamine + H2O = a 1-O-alkyl-sn-glycero-3-phosphate + ethanolamine + H(+)</text>
        <dbReference type="Rhea" id="RHEA:15965"/>
        <dbReference type="ChEBI" id="CHEBI:15377"/>
        <dbReference type="ChEBI" id="CHEBI:15378"/>
        <dbReference type="ChEBI" id="CHEBI:57603"/>
        <dbReference type="ChEBI" id="CHEBI:58014"/>
        <dbReference type="ChEBI" id="CHEBI:76168"/>
        <dbReference type="EC" id="3.1.4.39"/>
    </reaction>
</comment>
<comment type="catalytic activity">
    <reaction evidence="8">
        <text>a 1-acyl-sn-glycero-3-phosphoethanolamine + H2O = a 1-acyl-sn-glycero-3-phosphate + ethanolamine + H(+)</text>
        <dbReference type="Rhea" id="RHEA:39003"/>
        <dbReference type="ChEBI" id="CHEBI:15377"/>
        <dbReference type="ChEBI" id="CHEBI:15378"/>
        <dbReference type="ChEBI" id="CHEBI:57603"/>
        <dbReference type="ChEBI" id="CHEBI:57970"/>
        <dbReference type="ChEBI" id="CHEBI:64381"/>
    </reaction>
    <physiologicalReaction direction="left-to-right" evidence="23">
        <dbReference type="Rhea" id="RHEA:39004"/>
    </physiologicalReaction>
</comment>
<comment type="catalytic activity">
    <reaction evidence="8">
        <text>1-(9Z-octadecenoyl)-sn-glycero-3-phosphoethanolamine + H2O = 1-(9Z-octadecenoyl)-sn-glycero-3-phosphate + ethanolamine + H(+)</text>
        <dbReference type="Rhea" id="RHEA:38927"/>
        <dbReference type="ChEBI" id="CHEBI:15377"/>
        <dbReference type="ChEBI" id="CHEBI:15378"/>
        <dbReference type="ChEBI" id="CHEBI:57603"/>
        <dbReference type="ChEBI" id="CHEBI:74544"/>
        <dbReference type="ChEBI" id="CHEBI:74971"/>
    </reaction>
    <physiologicalReaction direction="left-to-right" evidence="23">
        <dbReference type="Rhea" id="RHEA:38928"/>
    </physiologicalReaction>
</comment>
<comment type="catalytic activity">
    <reaction evidence="1">
        <text>a 1-O-alkyl-sn-glycero-3-phosphocholine + H2O = a 1-O-alkyl-sn-glycero-3-phosphate + choline + H(+)</text>
        <dbReference type="Rhea" id="RHEA:39927"/>
        <dbReference type="ChEBI" id="CHEBI:15354"/>
        <dbReference type="ChEBI" id="CHEBI:15377"/>
        <dbReference type="ChEBI" id="CHEBI:15378"/>
        <dbReference type="ChEBI" id="CHEBI:30909"/>
        <dbReference type="ChEBI" id="CHEBI:58014"/>
    </reaction>
    <physiologicalReaction direction="left-to-right" evidence="1">
        <dbReference type="Rhea" id="RHEA:39928"/>
    </physiologicalReaction>
</comment>
<comment type="catalytic activity">
    <reaction evidence="1">
        <text>1-O-(9Z-octadecenyl)-sn-glycero-3-phosphocholine + H2O = 1-O-(9Z-octadecenyl)-sn-glycero-3-phosphate + choline + H(+)</text>
        <dbReference type="Rhea" id="RHEA:41684"/>
        <dbReference type="ChEBI" id="CHEBI:15354"/>
        <dbReference type="ChEBI" id="CHEBI:15377"/>
        <dbReference type="ChEBI" id="CHEBI:15378"/>
        <dbReference type="ChEBI" id="CHEBI:64396"/>
        <dbReference type="ChEBI" id="CHEBI:78402"/>
    </reaction>
    <physiologicalReaction direction="left-to-right" evidence="1">
        <dbReference type="Rhea" id="RHEA:41685"/>
    </physiologicalReaction>
</comment>
<comment type="catalytic activity">
    <reaction evidence="7">
        <text>1-O-hexadecyl-sn-glycero-3-phosphocholine + H2O = 1-O-hexadecyl-sn-glycero-3-phosphate + choline + H(+)</text>
        <dbReference type="Rhea" id="RHEA:41143"/>
        <dbReference type="ChEBI" id="CHEBI:15354"/>
        <dbReference type="ChEBI" id="CHEBI:15377"/>
        <dbReference type="ChEBI" id="CHEBI:15378"/>
        <dbReference type="ChEBI" id="CHEBI:64496"/>
        <dbReference type="ChEBI" id="CHEBI:77580"/>
    </reaction>
    <physiologicalReaction direction="left-to-right" evidence="22">
        <dbReference type="Rhea" id="RHEA:41144"/>
    </physiologicalReaction>
</comment>
<comment type="catalytic activity">
    <reaction evidence="7">
        <text>a 1-O-(1Z-alkenyl)-sn-glycero-3-phosphocholine + H2O = a 1-O-(1Z-alkenyl)-sn-glycero-3-phosphate + choline + H(+)</text>
        <dbReference type="Rhea" id="RHEA:41588"/>
        <dbReference type="ChEBI" id="CHEBI:15354"/>
        <dbReference type="ChEBI" id="CHEBI:15377"/>
        <dbReference type="ChEBI" id="CHEBI:15378"/>
        <dbReference type="ChEBI" id="CHEBI:77283"/>
        <dbReference type="ChEBI" id="CHEBI:77287"/>
    </reaction>
    <physiologicalReaction direction="left-to-right" evidence="22">
        <dbReference type="Rhea" id="RHEA:41589"/>
    </physiologicalReaction>
</comment>
<comment type="catalytic activity">
    <reaction evidence="1">
        <text>a 1-acyl-sn-glycero-3-phosphocholine + H2O = a 1-acyl-sn-glycero-3-phosphate + choline + H(+)</text>
        <dbReference type="Rhea" id="RHEA:38995"/>
        <dbReference type="ChEBI" id="CHEBI:15354"/>
        <dbReference type="ChEBI" id="CHEBI:15377"/>
        <dbReference type="ChEBI" id="CHEBI:15378"/>
        <dbReference type="ChEBI" id="CHEBI:57970"/>
        <dbReference type="ChEBI" id="CHEBI:58168"/>
        <dbReference type="EC" id="3.1.4.4"/>
    </reaction>
    <physiologicalReaction direction="left-to-right" evidence="1">
        <dbReference type="Rhea" id="RHEA:38996"/>
    </physiologicalReaction>
</comment>
<comment type="catalytic activity">
    <reaction evidence="7">
        <text>1-dodecanoyl-sn-glycero-3-phosphocholine + H2O = 1-dodecanoyl-sn-glycerol 3-phosphate + choline + H(+)</text>
        <dbReference type="Rhea" id="RHEA:38991"/>
        <dbReference type="ChEBI" id="CHEBI:15354"/>
        <dbReference type="ChEBI" id="CHEBI:15377"/>
        <dbReference type="ChEBI" id="CHEBI:15378"/>
        <dbReference type="ChEBI" id="CHEBI:72682"/>
        <dbReference type="ChEBI" id="CHEBI:74966"/>
    </reaction>
    <physiologicalReaction direction="left-to-right" evidence="22">
        <dbReference type="Rhea" id="RHEA:38992"/>
    </physiologicalReaction>
</comment>
<comment type="catalytic activity">
    <reaction evidence="7 8">
        <text>1-(9Z-octadecenoyl)-sn-glycero-3-phosphocholine + H2O = 1-(9Z-octadecenoyl)-sn-glycero-3-phosphate + choline + H(+)</text>
        <dbReference type="Rhea" id="RHEA:38915"/>
        <dbReference type="ChEBI" id="CHEBI:15354"/>
        <dbReference type="ChEBI" id="CHEBI:15377"/>
        <dbReference type="ChEBI" id="CHEBI:15378"/>
        <dbReference type="ChEBI" id="CHEBI:28610"/>
        <dbReference type="ChEBI" id="CHEBI:74544"/>
    </reaction>
    <physiologicalReaction direction="left-to-right" evidence="22 23">
        <dbReference type="Rhea" id="RHEA:38916"/>
    </physiologicalReaction>
</comment>
<comment type="catalytic activity">
    <reaction evidence="7">
        <text>1-tetradecanoyl-sn-glycero-3-phosphocholine + H2O = 1-tetradecanoyl-sn-glycerol 3-phosphate + choline + H(+)</text>
        <dbReference type="Rhea" id="RHEA:38983"/>
        <dbReference type="ChEBI" id="CHEBI:15354"/>
        <dbReference type="ChEBI" id="CHEBI:15377"/>
        <dbReference type="ChEBI" id="CHEBI:15378"/>
        <dbReference type="ChEBI" id="CHEBI:64489"/>
        <dbReference type="ChEBI" id="CHEBI:72683"/>
    </reaction>
    <physiologicalReaction direction="left-to-right" evidence="22">
        <dbReference type="Rhea" id="RHEA:38984"/>
    </physiologicalReaction>
</comment>
<comment type="catalytic activity">
    <reaction evidence="7">
        <text>1-decanoyl-sn-glycero-3-phosphocholine + H2O = 1-decanoyl-sn-glycero-3-phosphate + choline + H(+)</text>
        <dbReference type="Rhea" id="RHEA:41131"/>
        <dbReference type="ChEBI" id="CHEBI:15354"/>
        <dbReference type="ChEBI" id="CHEBI:15377"/>
        <dbReference type="ChEBI" id="CHEBI:15378"/>
        <dbReference type="ChEBI" id="CHEBI:77724"/>
        <dbReference type="ChEBI" id="CHEBI:77726"/>
    </reaction>
    <physiologicalReaction direction="left-to-right" evidence="22">
        <dbReference type="Rhea" id="RHEA:41132"/>
    </physiologicalReaction>
</comment>
<comment type="catalytic activity">
    <reaction evidence="1">
        <text>1-octadecanoyl-sn-glycero-3-phosphocholine + H2O = 1-octadecanoyl-sn-glycero-3-phosphate + choline + H(+)</text>
        <dbReference type="Rhea" id="RHEA:38979"/>
        <dbReference type="ChEBI" id="CHEBI:15354"/>
        <dbReference type="ChEBI" id="CHEBI:15377"/>
        <dbReference type="ChEBI" id="CHEBI:15378"/>
        <dbReference type="ChEBI" id="CHEBI:73858"/>
        <dbReference type="ChEBI" id="CHEBI:74565"/>
    </reaction>
    <physiologicalReaction direction="left-to-right" evidence="1">
        <dbReference type="Rhea" id="RHEA:38980"/>
    </physiologicalReaction>
</comment>
<comment type="catalytic activity">
    <reaction evidence="7">
        <text>1-hexadecanoyl-sn-glycero-3-phosphocholine + H2O = 1-hexadecanoyl-sn-glycero-3-phosphate + choline + H(+)</text>
        <dbReference type="Rhea" id="RHEA:38975"/>
        <dbReference type="ChEBI" id="CHEBI:15354"/>
        <dbReference type="ChEBI" id="CHEBI:15377"/>
        <dbReference type="ChEBI" id="CHEBI:15378"/>
        <dbReference type="ChEBI" id="CHEBI:57518"/>
        <dbReference type="ChEBI" id="CHEBI:72998"/>
    </reaction>
    <physiologicalReaction direction="left-to-right" evidence="22">
        <dbReference type="Rhea" id="RHEA:38976"/>
    </physiologicalReaction>
</comment>
<comment type="catalytic activity">
    <reaction evidence="1">
        <text>1-hexanoyl-sn-glycero-3-phosphocholine + H2O = 1-hexanoyl-sn-glycero-3-phosphate + choline + H(+)</text>
        <dbReference type="Rhea" id="RHEA:41400"/>
        <dbReference type="ChEBI" id="CHEBI:15354"/>
        <dbReference type="ChEBI" id="CHEBI:15377"/>
        <dbReference type="ChEBI" id="CHEBI:15378"/>
        <dbReference type="ChEBI" id="CHEBI:78215"/>
        <dbReference type="ChEBI" id="CHEBI:78223"/>
    </reaction>
    <physiologicalReaction direction="left-to-right" evidence="1">
        <dbReference type="Rhea" id="RHEA:41401"/>
    </physiologicalReaction>
</comment>
<comment type="catalytic activity">
    <reaction evidence="7">
        <text>1-(9Z,12Z)-octadecadienoyl-sn-glycero-3-phosphocholine + H2O = 1-(9Z,12Z)-octadecadienoyl-sn-glycero-3-phosphate + choline + H(+)</text>
        <dbReference type="Rhea" id="RHEA:41135"/>
        <dbReference type="ChEBI" id="CHEBI:15354"/>
        <dbReference type="ChEBI" id="CHEBI:15377"/>
        <dbReference type="ChEBI" id="CHEBI:15378"/>
        <dbReference type="ChEBI" id="CHEBI:28733"/>
        <dbReference type="ChEBI" id="CHEBI:74547"/>
    </reaction>
    <physiologicalReaction direction="left-to-right" evidence="22">
        <dbReference type="Rhea" id="RHEA:41136"/>
    </physiologicalReaction>
</comment>
<comment type="catalytic activity">
    <reaction evidence="1">
        <text>sphing-4-enine-phosphocholine + H2O = sphing-4-enine 1-phosphate + choline + H(+)</text>
        <dbReference type="Rhea" id="RHEA:38919"/>
        <dbReference type="ChEBI" id="CHEBI:15354"/>
        <dbReference type="ChEBI" id="CHEBI:15377"/>
        <dbReference type="ChEBI" id="CHEBI:15378"/>
        <dbReference type="ChEBI" id="CHEBI:58906"/>
        <dbReference type="ChEBI" id="CHEBI:60119"/>
    </reaction>
    <physiologicalReaction direction="left-to-right" evidence="1">
        <dbReference type="Rhea" id="RHEA:38920"/>
    </physiologicalReaction>
</comment>
<comment type="catalytic activity">
    <reaction evidence="7">
        <text>1-(5Z,8Z,11Z,14Z-eicosatetraenoyl)-sn-glycero-3-phosphocholine + H2O = 1-(5Z,8Z,11Z,14Z-eicosatetraenoyl)-sn-glycero-3-phosphate + choline + H(+)</text>
        <dbReference type="Rhea" id="RHEA:41139"/>
        <dbReference type="ChEBI" id="CHEBI:15354"/>
        <dbReference type="ChEBI" id="CHEBI:15377"/>
        <dbReference type="ChEBI" id="CHEBI:15378"/>
        <dbReference type="ChEBI" id="CHEBI:74344"/>
        <dbReference type="ChEBI" id="CHEBI:74938"/>
    </reaction>
    <physiologicalReaction direction="left-to-right" evidence="22">
        <dbReference type="Rhea" id="RHEA:41140"/>
    </physiologicalReaction>
</comment>
<comment type="catalytic activity">
    <reaction evidence="1">
        <text>a 2-acyl-sn-glycero-3-phosphocholine + H2O = a 2-acyl-sn-glycerol 3-phosphate + choline + H(+)</text>
        <dbReference type="Rhea" id="RHEA:41712"/>
        <dbReference type="ChEBI" id="CHEBI:15354"/>
        <dbReference type="ChEBI" id="CHEBI:15377"/>
        <dbReference type="ChEBI" id="CHEBI:15378"/>
        <dbReference type="ChEBI" id="CHEBI:57875"/>
        <dbReference type="ChEBI" id="CHEBI:64982"/>
    </reaction>
    <physiologicalReaction direction="left-to-right" evidence="1">
        <dbReference type="Rhea" id="RHEA:41713"/>
    </physiologicalReaction>
</comment>
<comment type="catalytic activity">
    <reaction evidence="1">
        <text>a 1,2-diacyl-sn-glycero-3-phosphocholine + H2O = a 1,2-diacyl-sn-glycero-3-phosphate + choline + H(+)</text>
        <dbReference type="Rhea" id="RHEA:14445"/>
        <dbReference type="ChEBI" id="CHEBI:15354"/>
        <dbReference type="ChEBI" id="CHEBI:15377"/>
        <dbReference type="ChEBI" id="CHEBI:15378"/>
        <dbReference type="ChEBI" id="CHEBI:57643"/>
        <dbReference type="ChEBI" id="CHEBI:58608"/>
        <dbReference type="EC" id="3.1.4.4"/>
    </reaction>
    <physiologicalReaction direction="left-to-right" evidence="1">
        <dbReference type="Rhea" id="RHEA:14446"/>
    </physiologicalReaction>
</comment>
<comment type="catalytic activity">
    <reaction evidence="7">
        <text>1,2-dioctanoyl-sn-glycero-3-phosphocholine + H2O = 1,2-dioctanoyl-sn-glycero-3-phosphate + choline + H(+)</text>
        <dbReference type="Rhea" id="RHEA:41416"/>
        <dbReference type="ChEBI" id="CHEBI:15354"/>
        <dbReference type="ChEBI" id="CHEBI:15377"/>
        <dbReference type="ChEBI" id="CHEBI:15378"/>
        <dbReference type="ChEBI" id="CHEBI:78228"/>
        <dbReference type="ChEBI" id="CHEBI:78229"/>
    </reaction>
    <physiologicalReaction direction="left-to-right" evidence="22">
        <dbReference type="Rhea" id="RHEA:41417"/>
    </physiologicalReaction>
</comment>
<comment type="catalytic activity">
    <reaction evidence="7">
        <text>1,2-didecanoyl-sn-glycero-3-phosphocholine + H2O = 1,2-didecanoyl-sn-glycero-3-phosphate + choline + H(+)</text>
        <dbReference type="Rhea" id="RHEA:41412"/>
        <dbReference type="ChEBI" id="CHEBI:15354"/>
        <dbReference type="ChEBI" id="CHEBI:15377"/>
        <dbReference type="ChEBI" id="CHEBI:15378"/>
        <dbReference type="ChEBI" id="CHEBI:78226"/>
        <dbReference type="ChEBI" id="CHEBI:78227"/>
    </reaction>
    <physiologicalReaction direction="left-to-right" evidence="22">
        <dbReference type="Rhea" id="RHEA:41413"/>
    </physiologicalReaction>
</comment>
<comment type="catalytic activity">
    <reaction evidence="8">
        <text>a 1-acyl-sn-glycero-3-phospho-L-serine + H2O = a 1-acyl-sn-glycero-3-phosphate + L-serine + H(+)</text>
        <dbReference type="Rhea" id="RHEA:38999"/>
        <dbReference type="ChEBI" id="CHEBI:15377"/>
        <dbReference type="ChEBI" id="CHEBI:15378"/>
        <dbReference type="ChEBI" id="CHEBI:33384"/>
        <dbReference type="ChEBI" id="CHEBI:57970"/>
        <dbReference type="ChEBI" id="CHEBI:64379"/>
    </reaction>
    <physiologicalReaction direction="left-to-right" evidence="23">
        <dbReference type="Rhea" id="RHEA:39000"/>
    </physiologicalReaction>
</comment>
<comment type="catalytic activity">
    <reaction evidence="8">
        <text>1-(9Z-octadecenoyl)-sn-glycero-3-phospho-L-serine + H2O = 1-(9Z-octadecenoyl)-sn-glycero-3-phosphate + L-serine + H(+)</text>
        <dbReference type="Rhea" id="RHEA:38931"/>
        <dbReference type="ChEBI" id="CHEBI:15377"/>
        <dbReference type="ChEBI" id="CHEBI:15378"/>
        <dbReference type="ChEBI" id="CHEBI:33384"/>
        <dbReference type="ChEBI" id="CHEBI:74544"/>
        <dbReference type="ChEBI" id="CHEBI:74617"/>
    </reaction>
    <physiologicalReaction direction="left-to-right" evidence="23">
        <dbReference type="Rhea" id="RHEA:38932"/>
    </physiologicalReaction>
</comment>
<comment type="catalytic activity">
    <reaction evidence="1">
        <text>a 2-acyl-sn-glycero-3-phospho-L-serine + H2O = a 2-acyl-sn-glycerol 3-phosphate + L-serine + H(+)</text>
        <dbReference type="Rhea" id="RHEA:41716"/>
        <dbReference type="ChEBI" id="CHEBI:15377"/>
        <dbReference type="ChEBI" id="CHEBI:15378"/>
        <dbReference type="ChEBI" id="CHEBI:33384"/>
        <dbReference type="ChEBI" id="CHEBI:64982"/>
        <dbReference type="ChEBI" id="CHEBI:65214"/>
    </reaction>
    <physiologicalReaction direction="left-to-right" evidence="1">
        <dbReference type="Rhea" id="RHEA:41717"/>
    </physiologicalReaction>
</comment>
<comment type="cofactor">
    <cofactor evidence="12 13 14">
        <name>Zn(2+)</name>
        <dbReference type="ChEBI" id="CHEBI:29105"/>
    </cofactor>
    <text evidence="12 13 14">Binds 2 Zn(2+) ions per subunit.</text>
</comment>
<comment type="cofactor">
    <cofactor evidence="12 13 14">
        <name>Ca(2+)</name>
        <dbReference type="ChEBI" id="CHEBI:29108"/>
    </cofactor>
    <text evidence="12 13 14">Binds 1 Ca(2+) ion per subunit.</text>
</comment>
<comment type="activity regulation">
    <text evidence="8 13 14">Inhibited by vanadate (PubMed:27268273). Inhibited by micromolar levels of bile salts, such as tauroursodeoxycholate. Not inhibited by taurodeoxycholate. Not inhibited by hydroxysterols, such as 7-hydroxycholesterol, testosterone, dexamethasone and prednisolone (PubMed:27075612). Inhibited by EDTA and EGTA (PubMed:12354767).</text>
</comment>
<comment type="subcellular location">
    <subcellularLocation>
        <location evidence="6 9 10 11 12">Secreted</location>
    </subcellularLocation>
</comment>
<comment type="alternative products">
    <event type="alternative splicing"/>
    <isoform>
        <id>Q64610-1</id>
        <name>1</name>
        <sequence type="displayed"/>
    </isoform>
    <isoform>
        <id>Q64610-2</id>
        <name>2</name>
        <sequence type="described" ref="VSP_024018"/>
    </isoform>
</comment>
<comment type="tissue specificity">
    <text evidence="11 17">Abundantly expressed in cerebrum and cerebellum. Localized in secretory epithelial cells in the brain and the eye including choroid plexus epithelial cells, ciliary epithelial cells, iris pigment epithelial cells, and retinal pigment cells.</text>
</comment>
<comment type="domain">
    <text evidence="2">The nuclease-like domain is most probably catalytically inactive as residues that are essential for catalysis in the DNA/RNA non-specific endonucleases are not conserved. However, it is required for the stability of the protein and the catalytic activity born by the Phosphodiesterase domain.</text>
</comment>
<comment type="PTM">
    <text evidence="2">N-glycosylation, but not furin-cleavage, plays a critical role on secretion and on lysoPLD activity.</text>
</comment>
<comment type="PTM">
    <text evidence="2">The interdomain disulfide bond between Cys-413 and Cys-830 is essential for catalytic activity.</text>
</comment>
<comment type="similarity">
    <text evidence="21">Belongs to the nucleotide pyrophosphatase/phosphodiesterase family.</text>
</comment>
<reference key="1">
    <citation type="journal article" date="1994" name="J. Biol. Chem.">
        <title>Molecular cloning, expression, and localization of a brain-specific phosphodiesterase I/nucleotide pyrophosphatase (PD-Ialpha) from rat brain.</title>
        <authorList>
            <person name="Narita M."/>
            <person name="Goji J."/>
            <person name="Nakamura H."/>
            <person name="Sano K."/>
        </authorList>
    </citation>
    <scope>NUCLEOTIDE SEQUENCE [MRNA] (ISOFORM 1)</scope>
    <scope>TISSUE SPECIFICITY</scope>
    <source>
        <strain>Sprague-Dawley</strain>
        <tissue>Brain</tissue>
    </source>
</reference>
<reference key="2">
    <citation type="journal article" date="2006" name="Genes Cells">
        <title>The N-terminal hydrophobic sequence of autotaxin (ENPP2) functions as a signal peptide.</title>
        <authorList>
            <person name="Koike S."/>
            <person name="Keino-Masu K."/>
            <person name="Ohto T."/>
            <person name="Masu M."/>
        </authorList>
    </citation>
    <scope>NUCLEOTIDE SEQUENCE [MRNA] (ISOFORM 2)</scope>
    <scope>PROTEIN SEQUENCE OF 28-32 AND 36-41</scope>
    <scope>SUBCELLULAR LOCATION</scope>
    <scope>TISSUE SPECIFICITY</scope>
    <source>
        <strain>Sprague-Dawley</strain>
    </source>
</reference>
<reference key="3">
    <citation type="journal article" date="2004" name="Genome Res.">
        <title>The status, quality, and expansion of the NIH full-length cDNA project: the Mammalian Gene Collection (MGC).</title>
        <authorList>
            <consortium name="The MGC Project Team"/>
        </authorList>
    </citation>
    <scope>NUCLEOTIDE SEQUENCE [LARGE SCALE MRNA] (ISOFORM 1)</scope>
</reference>
<reference key="4">
    <citation type="journal article" date="2002" name="J. Biol. Chem.">
        <title>Identification of human plasma lysophospholipase D, a lysophosphatidic acid-producing enzyme, as autotaxin, a multifunctional phosphodiesterase.</title>
        <authorList>
            <person name="Tokumura A."/>
            <person name="Majima E."/>
            <person name="Kariya Y."/>
            <person name="Tominaga K."/>
            <person name="Kogure K."/>
            <person name="Yasuda K."/>
            <person name="Fukuzawa K."/>
        </authorList>
    </citation>
    <scope>FUNCTION</scope>
    <scope>CATALYTIC ACTIVITY</scope>
</reference>
<reference key="5">
    <citation type="journal article" date="2002" name="J. Biol. Chem.">
        <title>Serum lysophosphatidic acid is produced through diverse phospholipase pathways.</title>
        <authorList>
            <person name="Aoki J."/>
            <person name="Taira A."/>
            <person name="Takanezawa Y."/>
            <person name="Kishi Y."/>
            <person name="Hama K."/>
            <person name="Kishimoto T."/>
            <person name="Mizuno K."/>
            <person name="Saku K."/>
            <person name="Taguchi R."/>
            <person name="Arai H."/>
        </authorList>
    </citation>
    <scope>FUNCTION</scope>
    <scope>CATALYTIC ACTIVITY</scope>
    <scope>ACTIVITY REGULATION</scope>
</reference>
<reference key="6">
    <citation type="journal article" date="2002" name="J. Cell Biol.">
        <title>Autotaxin has lysophospholipase D activity leading to tumor cell growth and motility by lysophosphatidic acid production.</title>
        <authorList>
            <person name="Umezu-Goto M."/>
            <person name="Kishi Y."/>
            <person name="Taira A."/>
            <person name="Hama K."/>
            <person name="Dohmae N."/>
            <person name="Takio K."/>
            <person name="Yamori T."/>
            <person name="Mills G.B."/>
            <person name="Inoue K."/>
            <person name="Aoki J."/>
            <person name="Arai H."/>
        </authorList>
    </citation>
    <scope>FUNCTION</scope>
    <scope>CATALYTIC ACTIVITY</scope>
    <scope>SUBCELLULAR LOCATION</scope>
</reference>
<reference key="7">
    <citation type="journal article" date="2003" name="FEBS Lett.">
        <title>The hydrolysis of lysophospholipids and nucleotides by autotaxin (NPP2) involves a single catalytic site.</title>
        <authorList>
            <person name="Gijsbers R."/>
            <person name="Aoki J."/>
            <person name="Arai H."/>
            <person name="Bollen M."/>
        </authorList>
    </citation>
    <scope>CATALYTIC ACTIVITY</scope>
    <scope>SUBCELLULAR LOCATION</scope>
    <scope>MUTAGENESIS OF ASP-171; THR-209; ASP-311 AND HIS-315</scope>
    <scope>ACTIVE SITE</scope>
</reference>
<reference key="8">
    <citation type="journal article" date="2005" name="J. Cell Sci.">
        <title>Proteolytic maturation and activation of autotaxin (NPP2), a secreted metastasis-enhancing lysophospholipase D.</title>
        <authorList>
            <person name="Jansen S."/>
            <person name="Stefan C."/>
            <person name="Creemers J.W."/>
            <person name="Waelkens E."/>
            <person name="Van Eynde A."/>
            <person name="Stalmans W."/>
            <person name="Bollen M."/>
        </authorList>
    </citation>
    <scope>PROTEOLYTIC PROCESSING</scope>
    <scope>PROTEIN SEQUENCE OF N-TERMINUS</scope>
    <scope>FUNCTION CHARACTERIZATION</scope>
    <scope>SUBCELLULAR LOCATION</scope>
    <scope>MUTAGENESIS OF ILE-13; 16-PHE--PHE-18; 18-PHE--SER-21; 21-SER--ILE-24; 24-ILE--CYS-25 AND 28-PHE--ALA-30</scope>
</reference>
<reference key="9">
    <citation type="journal article" date="2017" name="ACS Med. Chem. Lett.">
        <title>Discovery of BI-2545: A Novel Autotaxin Inhibitor That Significantly Reduces LPA Levels in Vivo.</title>
        <authorList>
            <person name="Kuttruff C.A."/>
            <person name="Ferrara M."/>
            <person name="Bretschneider T."/>
            <person name="Hoerer S."/>
            <person name="Handschuh S."/>
            <person name="Nosse B."/>
            <person name="Romig H."/>
            <person name="Nicklin P."/>
            <person name="Roth G.J."/>
        </authorList>
    </citation>
    <scope>FUNCTION</scope>
    <scope>CATALYTIC ACTIVITY</scope>
</reference>
<reference evidence="25 26" key="10">
    <citation type="journal article" date="2011" name="Nat. Struct. Mol. Biol.">
        <title>Structural basis of substrate discrimination and integrin binding by autotaxin.</title>
        <authorList>
            <person name="Hausmann J."/>
            <person name="Kamtekar S."/>
            <person name="Christodoulou E."/>
            <person name="Day J.E."/>
            <person name="Wu T."/>
            <person name="Fulkerson Z."/>
            <person name="Albers H.M."/>
            <person name="van Meeteren L.A."/>
            <person name="Houben A.J."/>
            <person name="van Zeijl L."/>
            <person name="Jansen S."/>
            <person name="Andries M."/>
            <person name="Hall T."/>
            <person name="Pegg L.E."/>
            <person name="Benson T.E."/>
            <person name="Kasiem M."/>
            <person name="Harlos K."/>
            <person name="Kooi C.W."/>
            <person name="Smyth S.S."/>
            <person name="Ovaa H."/>
            <person name="Bollen M."/>
            <person name="Morris A.J."/>
            <person name="Moolenaar W.H."/>
            <person name="Perrakis A."/>
        </authorList>
    </citation>
    <scope>X-RAY CRYSTALLOGRAPHY (2.05 ANGSTROMS) OF 36-862 IN COMPLEX WITH INHIBITOR; CALCIUM AND ZINC IONS</scope>
    <scope>CATALYTIC ACTIVITY</scope>
    <scope>COFACTOR</scope>
    <scope>CALCIUM BINDING</scope>
    <scope>DISULFIDE BONDS</scope>
    <scope>GLYCOSYLATION AT ASN-524</scope>
    <scope>ACTIVE SITE</scope>
    <scope>MUTAGENESIS OF LYS-430 AND 764-ASP--ASP-768</scope>
    <scope>SUBCELLULAR LOCATION</scope>
</reference>
<reference evidence="32 33 34" key="11">
    <citation type="journal article" date="2016" name="ACS Med. Chem. Lett.">
        <title>Novel Autotaxin Inhibitors for the Treatment of Osteoarthritis Pain: Lead Optimization via Structure-Based Drug Design.</title>
        <authorList>
            <person name="Jones S.B."/>
            <person name="Pfeifer L.A."/>
            <person name="Bleisch T.J."/>
            <person name="Beauchamp T.J."/>
            <person name="Durbin J.D."/>
            <person name="Klimkowski V.J."/>
            <person name="Hughes N.E."/>
            <person name="Rito C.J."/>
            <person name="Dao Y."/>
            <person name="Gruber J.M."/>
            <person name="Bui H."/>
            <person name="Chambers M.G."/>
            <person name="Chandrasekhar S."/>
            <person name="Lin C."/>
            <person name="McCann D.J."/>
            <person name="Mudra D.R."/>
            <person name="Oskins J.L."/>
            <person name="Swearingen C.A."/>
            <person name="Thirunavukkarasu K."/>
            <person name="Norman B.H."/>
        </authorList>
    </citation>
    <scope>X-RAY CRYSTALLOGRAPHY (2.41 ANGSTROMS) IN COMPLEX WITH INHIBITOR; CALCIUM AND ZINC</scope>
    <scope>CATALYTIC ACTIVITY</scope>
    <scope>COFACTOR</scope>
    <scope>FUNCTION</scope>
    <scope>GLYCOSYLATION AT ASN-410 AND ASN-524</scope>
    <scope>DISULFIDE BONDS</scope>
</reference>
<reference evidence="30 31" key="12">
    <citation type="journal article" date="2016" name="J. Struct. Biol.">
        <title>Structural snapshots of the catalytic cycle of the phosphodiesterase Autotaxin.</title>
        <authorList>
            <person name="Hausmann J."/>
            <person name="Keune W.J."/>
            <person name="Hipgrave Ederveen A.L."/>
            <person name="van Zeijl L."/>
            <person name="Joosten R.P."/>
            <person name="Perrakis A."/>
        </authorList>
    </citation>
    <scope>X-RAY CRYSTALLOGRAPHY (2.05 ANGSTROMS) OF 36-887 IN COMPLEXES WITH PHOSPHATE; VANADATE; HYDROXYCHOLESTEROL; CALCIUM AND ZINC</scope>
    <scope>FUNCTION</scope>
    <scope>CATALYTIC ACTIVITY</scope>
    <scope>ACTIVITY REGULATION</scope>
    <scope>COFACTOR</scope>
    <scope>ACTIVE SITE</scope>
    <scope>GLYCOSYLATION AT ASN-524</scope>
    <scope>DISULFIDE BONDS</scope>
</reference>
<reference evidence="27 28 29" key="13">
    <citation type="journal article" date="2016" name="Nat. Commun.">
        <title>Steroid binding to Autotaxin links bile salts and lysophosphatidic acid signalling.</title>
        <authorList>
            <person name="Keune W.J."/>
            <person name="Hausmann J."/>
            <person name="Bolier R."/>
            <person name="Tolenaars D."/>
            <person name="Kremer A."/>
            <person name="Heidebrecht T."/>
            <person name="Joosten R.P."/>
            <person name="Sunkara M."/>
            <person name="Morris A.J."/>
            <person name="Matas-Rico E."/>
            <person name="Moolenaar W.H."/>
            <person name="Oude Elferink R.P."/>
            <person name="Perrakis A."/>
        </authorList>
    </citation>
    <scope>X-RAY CRYSTALLOGRAPHY (1.60 ANGSTROMS) OF 36-887 IN COMPLEXES WITH OLEOYL LYSOPHOSPHATIDIC ACID; STEROIDS; CALCIUM AND ZINC</scope>
    <scope>CATALYTIC ACTIVITY</scope>
    <scope>FUNCTION</scope>
    <scope>ACTIVITY REGULATION</scope>
    <scope>COFACTOR</scope>
    <scope>GLYCOSYLATION AT ASN-524</scope>
    <scope>DISULFIDE BONDS</scope>
</reference>
<proteinExistence type="evidence at protein level"/>
<dbReference type="EC" id="3.1.4.39" evidence="6 9 12 13 14 15 16"/>
<dbReference type="EC" id="3.1.4.4" evidence="1"/>
<dbReference type="EMBL" id="D28560">
    <property type="protein sequence ID" value="BAA05910.1"/>
    <property type="molecule type" value="mRNA"/>
</dbReference>
<dbReference type="EMBL" id="DQ131564">
    <property type="protein sequence ID" value="AAZ99725.1"/>
    <property type="molecule type" value="mRNA"/>
</dbReference>
<dbReference type="EMBL" id="BC081747">
    <property type="protein sequence ID" value="AAH81747.1"/>
    <property type="molecule type" value="mRNA"/>
</dbReference>
<dbReference type="PIR" id="A55453">
    <property type="entry name" value="A55453"/>
</dbReference>
<dbReference type="RefSeq" id="NP_476445.2">
    <property type="nucleotide sequence ID" value="NM_057104.2"/>
</dbReference>
<dbReference type="RefSeq" id="XP_063120396.1">
    <molecule id="Q64610-1"/>
    <property type="nucleotide sequence ID" value="XM_063264326.1"/>
</dbReference>
<dbReference type="PDB" id="2XR9">
    <property type="method" value="X-ray"/>
    <property type="resolution" value="2.05 A"/>
    <property type="chains" value="A=36-887"/>
</dbReference>
<dbReference type="PDB" id="2XRG">
    <property type="method" value="X-ray"/>
    <property type="resolution" value="3.20 A"/>
    <property type="chains" value="A=1-887"/>
</dbReference>
<dbReference type="PDB" id="5DLT">
    <property type="method" value="X-ray"/>
    <property type="resolution" value="1.60 A"/>
    <property type="chains" value="A=36-887"/>
</dbReference>
<dbReference type="PDB" id="5DLV">
    <property type="method" value="X-ray"/>
    <property type="resolution" value="2.00 A"/>
    <property type="chains" value="A/B=36-887"/>
</dbReference>
<dbReference type="PDB" id="5DLW">
    <property type="method" value="X-ray"/>
    <property type="resolution" value="1.80 A"/>
    <property type="chains" value="A=36-887"/>
</dbReference>
<dbReference type="PDB" id="5IJQ">
    <property type="method" value="X-ray"/>
    <property type="resolution" value="2.05 A"/>
    <property type="chains" value="A=36-887"/>
</dbReference>
<dbReference type="PDB" id="5IJS">
    <property type="method" value="X-ray"/>
    <property type="resolution" value="2.20 A"/>
    <property type="chains" value="A=36-887"/>
</dbReference>
<dbReference type="PDB" id="5L0B">
    <property type="method" value="X-ray"/>
    <property type="resolution" value="2.41 A"/>
    <property type="chains" value="A/B=1-887"/>
</dbReference>
<dbReference type="PDB" id="5L0E">
    <property type="method" value="X-ray"/>
    <property type="resolution" value="3.06 A"/>
    <property type="chains" value="A/B=1-887"/>
</dbReference>
<dbReference type="PDB" id="5L0K">
    <property type="method" value="X-ray"/>
    <property type="resolution" value="2.73 A"/>
    <property type="chains" value="A/B=51-884"/>
</dbReference>
<dbReference type="PDB" id="5LQQ">
    <property type="method" value="X-ray"/>
    <property type="resolution" value="2.40 A"/>
    <property type="chains" value="A=36-887"/>
</dbReference>
<dbReference type="PDB" id="5M0D">
    <property type="method" value="X-ray"/>
    <property type="resolution" value="2.40 A"/>
    <property type="chains" value="A=36-887"/>
</dbReference>
<dbReference type="PDB" id="5M0E">
    <property type="method" value="X-ray"/>
    <property type="resolution" value="1.95 A"/>
    <property type="chains" value="A=36-887"/>
</dbReference>
<dbReference type="PDB" id="5M0M">
    <property type="method" value="X-ray"/>
    <property type="resolution" value="2.10 A"/>
    <property type="chains" value="A=36-887"/>
</dbReference>
<dbReference type="PDB" id="5M0S">
    <property type="method" value="X-ray"/>
    <property type="resolution" value="2.10 A"/>
    <property type="chains" value="A=36-887"/>
</dbReference>
<dbReference type="PDB" id="5S9L">
    <property type="method" value="X-ray"/>
    <property type="resolution" value="1.90 A"/>
    <property type="chains" value="A=28-887"/>
</dbReference>
<dbReference type="PDB" id="5S9M">
    <property type="method" value="X-ray"/>
    <property type="resolution" value="1.80 A"/>
    <property type="chains" value="A=28-887"/>
</dbReference>
<dbReference type="PDB" id="5S9N">
    <property type="method" value="X-ray"/>
    <property type="resolution" value="1.80 A"/>
    <property type="chains" value="A=28-887"/>
</dbReference>
<dbReference type="PDB" id="7G2E">
    <property type="method" value="X-ray"/>
    <property type="resolution" value="1.72 A"/>
    <property type="chains" value="A=28-887"/>
</dbReference>
<dbReference type="PDB" id="7G2F">
    <property type="method" value="X-ray"/>
    <property type="resolution" value="2.32 A"/>
    <property type="chains" value="A=28-887"/>
</dbReference>
<dbReference type="PDB" id="7G2G">
    <property type="method" value="X-ray"/>
    <property type="resolution" value="2.06 A"/>
    <property type="chains" value="A=28-887"/>
</dbReference>
<dbReference type="PDB" id="7G2H">
    <property type="method" value="X-ray"/>
    <property type="resolution" value="2.54 A"/>
    <property type="chains" value="A=28-887"/>
</dbReference>
<dbReference type="PDB" id="7G2I">
    <property type="method" value="X-ray"/>
    <property type="resolution" value="1.60 A"/>
    <property type="chains" value="A=28-887"/>
</dbReference>
<dbReference type="PDB" id="7G2J">
    <property type="method" value="X-ray"/>
    <property type="resolution" value="1.93 A"/>
    <property type="chains" value="A=28-887"/>
</dbReference>
<dbReference type="PDB" id="7G2K">
    <property type="method" value="X-ray"/>
    <property type="resolution" value="1.84 A"/>
    <property type="chains" value="A=28-887"/>
</dbReference>
<dbReference type="PDB" id="7G2L">
    <property type="method" value="X-ray"/>
    <property type="resolution" value="1.90 A"/>
    <property type="chains" value="A=28-887"/>
</dbReference>
<dbReference type="PDB" id="7G2M">
    <property type="method" value="X-ray"/>
    <property type="resolution" value="2.41 A"/>
    <property type="chains" value="A=28-887"/>
</dbReference>
<dbReference type="PDB" id="7G2N">
    <property type="method" value="X-ray"/>
    <property type="resolution" value="2.40 A"/>
    <property type="chains" value="A=28-887"/>
</dbReference>
<dbReference type="PDB" id="7G2O">
    <property type="method" value="X-ray"/>
    <property type="resolution" value="2.06 A"/>
    <property type="chains" value="A=28-887"/>
</dbReference>
<dbReference type="PDB" id="7G2P">
    <property type="method" value="X-ray"/>
    <property type="resolution" value="1.95 A"/>
    <property type="chains" value="A=28-887"/>
</dbReference>
<dbReference type="PDB" id="7G2Q">
    <property type="method" value="X-ray"/>
    <property type="resolution" value="1.83 A"/>
    <property type="chains" value="A=28-887"/>
</dbReference>
<dbReference type="PDB" id="7G2R">
    <property type="method" value="X-ray"/>
    <property type="resolution" value="1.70 A"/>
    <property type="chains" value="A=28-887"/>
</dbReference>
<dbReference type="PDB" id="7G2S">
    <property type="method" value="X-ray"/>
    <property type="resolution" value="1.65 A"/>
    <property type="chains" value="A=28-887"/>
</dbReference>
<dbReference type="PDB" id="7G2T">
    <property type="method" value="X-ray"/>
    <property type="resolution" value="1.55 A"/>
    <property type="chains" value="A=28-887"/>
</dbReference>
<dbReference type="PDB" id="7G2U">
    <property type="method" value="X-ray"/>
    <property type="resolution" value="1.74 A"/>
    <property type="chains" value="A=28-887"/>
</dbReference>
<dbReference type="PDB" id="7G2V">
    <property type="method" value="X-ray"/>
    <property type="resolution" value="1.52 A"/>
    <property type="chains" value="A=28-887"/>
</dbReference>
<dbReference type="PDB" id="7G2W">
    <property type="method" value="X-ray"/>
    <property type="resolution" value="1.25 A"/>
    <property type="chains" value="A=28-887"/>
</dbReference>
<dbReference type="PDB" id="7G2X">
    <property type="method" value="X-ray"/>
    <property type="resolution" value="1.45 A"/>
    <property type="chains" value="A=28-887"/>
</dbReference>
<dbReference type="PDB" id="7G2Y">
    <property type="method" value="X-ray"/>
    <property type="resolution" value="1.68 A"/>
    <property type="chains" value="A=28-887"/>
</dbReference>
<dbReference type="PDB" id="7G2Z">
    <property type="method" value="X-ray"/>
    <property type="resolution" value="1.96 A"/>
    <property type="chains" value="A=28-887"/>
</dbReference>
<dbReference type="PDB" id="7G30">
    <property type="method" value="X-ray"/>
    <property type="resolution" value="1.88 A"/>
    <property type="chains" value="A=28-887"/>
</dbReference>
<dbReference type="PDB" id="7G31">
    <property type="method" value="X-ray"/>
    <property type="resolution" value="1.71 A"/>
    <property type="chains" value="A=28-887"/>
</dbReference>
<dbReference type="PDB" id="7G32">
    <property type="method" value="X-ray"/>
    <property type="resolution" value="1.88 A"/>
    <property type="chains" value="A=28-887"/>
</dbReference>
<dbReference type="PDB" id="7G33">
    <property type="method" value="X-ray"/>
    <property type="resolution" value="1.60 A"/>
    <property type="chains" value="A=28-887"/>
</dbReference>
<dbReference type="PDB" id="7G34">
    <property type="method" value="X-ray"/>
    <property type="resolution" value="1.98 A"/>
    <property type="chains" value="A=28-887"/>
</dbReference>
<dbReference type="PDB" id="7G35">
    <property type="method" value="X-ray"/>
    <property type="resolution" value="1.67 A"/>
    <property type="chains" value="A=28-887"/>
</dbReference>
<dbReference type="PDB" id="7G36">
    <property type="method" value="X-ray"/>
    <property type="resolution" value="1.97 A"/>
    <property type="chains" value="A=28-887"/>
</dbReference>
<dbReference type="PDB" id="7G37">
    <property type="method" value="X-ray"/>
    <property type="resolution" value="1.77 A"/>
    <property type="chains" value="A=28-887"/>
</dbReference>
<dbReference type="PDB" id="7G38">
    <property type="method" value="X-ray"/>
    <property type="resolution" value="1.49 A"/>
    <property type="chains" value="A=28-887"/>
</dbReference>
<dbReference type="PDB" id="7G39">
    <property type="method" value="X-ray"/>
    <property type="resolution" value="1.98 A"/>
    <property type="chains" value="A=28-887"/>
</dbReference>
<dbReference type="PDB" id="7G3A">
    <property type="method" value="X-ray"/>
    <property type="resolution" value="1.79 A"/>
    <property type="chains" value="A=28-887"/>
</dbReference>
<dbReference type="PDB" id="7G3B">
    <property type="method" value="X-ray"/>
    <property type="resolution" value="1.56 A"/>
    <property type="chains" value="A=28-887"/>
</dbReference>
<dbReference type="PDB" id="7G3C">
    <property type="method" value="X-ray"/>
    <property type="resolution" value="1.68 A"/>
    <property type="chains" value="A=28-887"/>
</dbReference>
<dbReference type="PDB" id="7G3D">
    <property type="method" value="X-ray"/>
    <property type="resolution" value="1.88 A"/>
    <property type="chains" value="A=28-887"/>
</dbReference>
<dbReference type="PDB" id="7G3E">
    <property type="method" value="X-ray"/>
    <property type="resolution" value="1.76 A"/>
    <property type="chains" value="A=28-887"/>
</dbReference>
<dbReference type="PDB" id="7G3F">
    <property type="method" value="X-ray"/>
    <property type="resolution" value="1.85 A"/>
    <property type="chains" value="A=28-887"/>
</dbReference>
<dbReference type="PDB" id="7G3G">
    <property type="method" value="X-ray"/>
    <property type="resolution" value="1.87 A"/>
    <property type="chains" value="A=28-887"/>
</dbReference>
<dbReference type="PDB" id="7G3H">
    <property type="method" value="X-ray"/>
    <property type="resolution" value="1.64 A"/>
    <property type="chains" value="A=28-887"/>
</dbReference>
<dbReference type="PDB" id="7G3I">
    <property type="method" value="X-ray"/>
    <property type="resolution" value="1.84 A"/>
    <property type="chains" value="A=28-887"/>
</dbReference>
<dbReference type="PDB" id="7G3J">
    <property type="method" value="X-ray"/>
    <property type="resolution" value="1.99 A"/>
    <property type="chains" value="A=28-887"/>
</dbReference>
<dbReference type="PDB" id="7G3K">
    <property type="method" value="X-ray"/>
    <property type="resolution" value="1.61 A"/>
    <property type="chains" value="A=28-887"/>
</dbReference>
<dbReference type="PDB" id="7G3L">
    <property type="method" value="X-ray"/>
    <property type="resolution" value="1.84 A"/>
    <property type="chains" value="A=28-887"/>
</dbReference>
<dbReference type="PDB" id="7G3M">
    <property type="method" value="X-ray"/>
    <property type="resolution" value="1.75 A"/>
    <property type="chains" value="A=28-887"/>
</dbReference>
<dbReference type="PDB" id="7G3N">
    <property type="method" value="X-ray"/>
    <property type="resolution" value="1.72 A"/>
    <property type="chains" value="A=28-887"/>
</dbReference>
<dbReference type="PDB" id="7G3O">
    <property type="method" value="X-ray"/>
    <property type="resolution" value="1.60 A"/>
    <property type="chains" value="A=28-887"/>
</dbReference>
<dbReference type="PDB" id="7G3P">
    <property type="method" value="X-ray"/>
    <property type="resolution" value="1.58 A"/>
    <property type="chains" value="A=28-887"/>
</dbReference>
<dbReference type="PDB" id="7G3Q">
    <property type="method" value="X-ray"/>
    <property type="resolution" value="1.78 A"/>
    <property type="chains" value="A=28-887"/>
</dbReference>
<dbReference type="PDB" id="7G3R">
    <property type="method" value="X-ray"/>
    <property type="resolution" value="1.76 A"/>
    <property type="chains" value="A=28-887"/>
</dbReference>
<dbReference type="PDB" id="7G3S">
    <property type="method" value="X-ray"/>
    <property type="resolution" value="1.77 A"/>
    <property type="chains" value="A=28-887"/>
</dbReference>
<dbReference type="PDB" id="7G3T">
    <property type="method" value="X-ray"/>
    <property type="resolution" value="1.33 A"/>
    <property type="chains" value="A=28-887"/>
</dbReference>
<dbReference type="PDB" id="7G3U">
    <property type="method" value="X-ray"/>
    <property type="resolution" value="1.75 A"/>
    <property type="chains" value="A=28-887"/>
</dbReference>
<dbReference type="PDB" id="7G3V">
    <property type="method" value="X-ray"/>
    <property type="resolution" value="1.74 A"/>
    <property type="chains" value="A=28-887"/>
</dbReference>
<dbReference type="PDB" id="7G3W">
    <property type="method" value="X-ray"/>
    <property type="resolution" value="1.51 A"/>
    <property type="chains" value="A=28-887"/>
</dbReference>
<dbReference type="PDB" id="7G3X">
    <property type="method" value="X-ray"/>
    <property type="resolution" value="1.82 A"/>
    <property type="chains" value="A=28-887"/>
</dbReference>
<dbReference type="PDB" id="7G3Y">
    <property type="method" value="X-ray"/>
    <property type="resolution" value="1.62 A"/>
    <property type="chains" value="A=28-887"/>
</dbReference>
<dbReference type="PDB" id="7G3Z">
    <property type="method" value="X-ray"/>
    <property type="resolution" value="1.90 A"/>
    <property type="chains" value="A=28-887"/>
</dbReference>
<dbReference type="PDB" id="7G40">
    <property type="method" value="X-ray"/>
    <property type="resolution" value="1.89 A"/>
    <property type="chains" value="A=28-887"/>
</dbReference>
<dbReference type="PDB" id="7G41">
    <property type="method" value="X-ray"/>
    <property type="resolution" value="2.11 A"/>
    <property type="chains" value="A=28-887"/>
</dbReference>
<dbReference type="PDB" id="7G42">
    <property type="method" value="X-ray"/>
    <property type="resolution" value="2.07 A"/>
    <property type="chains" value="A=28-887"/>
</dbReference>
<dbReference type="PDB" id="7G43">
    <property type="method" value="X-ray"/>
    <property type="resolution" value="1.94 A"/>
    <property type="chains" value="A=28-887"/>
</dbReference>
<dbReference type="PDB" id="7G44">
    <property type="method" value="X-ray"/>
    <property type="resolution" value="1.77 A"/>
    <property type="chains" value="A=28-887"/>
</dbReference>
<dbReference type="PDB" id="7G45">
    <property type="method" value="X-ray"/>
    <property type="resolution" value="1.80 A"/>
    <property type="chains" value="A=28-887"/>
</dbReference>
<dbReference type="PDB" id="7G46">
    <property type="method" value="X-ray"/>
    <property type="resolution" value="1.93 A"/>
    <property type="chains" value="A=28-887"/>
</dbReference>
<dbReference type="PDB" id="7G47">
    <property type="method" value="X-ray"/>
    <property type="resolution" value="1.94 A"/>
    <property type="chains" value="A=28-887"/>
</dbReference>
<dbReference type="PDB" id="7G48">
    <property type="method" value="X-ray"/>
    <property type="resolution" value="1.77 A"/>
    <property type="chains" value="A=28-887"/>
</dbReference>
<dbReference type="PDB" id="7G49">
    <property type="method" value="X-ray"/>
    <property type="resolution" value="1.90 A"/>
    <property type="chains" value="A=28-887"/>
</dbReference>
<dbReference type="PDB" id="7G4A">
    <property type="method" value="X-ray"/>
    <property type="resolution" value="2.67 A"/>
    <property type="chains" value="A=28-887"/>
</dbReference>
<dbReference type="PDB" id="7G4B">
    <property type="method" value="X-ray"/>
    <property type="resolution" value="2.16 A"/>
    <property type="chains" value="A=28-887"/>
</dbReference>
<dbReference type="PDB" id="7G4C">
    <property type="method" value="X-ray"/>
    <property type="resolution" value="1.64 A"/>
    <property type="chains" value="A=28-887"/>
</dbReference>
<dbReference type="PDB" id="7G4D">
    <property type="method" value="X-ray"/>
    <property type="resolution" value="2.18 A"/>
    <property type="chains" value="A=28-887"/>
</dbReference>
<dbReference type="PDB" id="7G4E">
    <property type="method" value="X-ray"/>
    <property type="resolution" value="2.03 A"/>
    <property type="chains" value="A=28-887"/>
</dbReference>
<dbReference type="PDB" id="7G4F">
    <property type="method" value="X-ray"/>
    <property type="resolution" value="2.06 A"/>
    <property type="chains" value="A=28-887"/>
</dbReference>
<dbReference type="PDB" id="7G4G">
    <property type="method" value="X-ray"/>
    <property type="resolution" value="1.71 A"/>
    <property type="chains" value="A=28-887"/>
</dbReference>
<dbReference type="PDB" id="7G4H">
    <property type="method" value="X-ray"/>
    <property type="resolution" value="2.06 A"/>
    <property type="chains" value="A=28-887"/>
</dbReference>
<dbReference type="PDB" id="7G4I">
    <property type="method" value="X-ray"/>
    <property type="resolution" value="2.62 A"/>
    <property type="chains" value="A=28-887"/>
</dbReference>
<dbReference type="PDB" id="7G4J">
    <property type="method" value="X-ray"/>
    <property type="resolution" value="2.38 A"/>
    <property type="chains" value="A=28-887"/>
</dbReference>
<dbReference type="PDB" id="7G4K">
    <property type="method" value="X-ray"/>
    <property type="resolution" value="1.85 A"/>
    <property type="chains" value="A=28-887"/>
</dbReference>
<dbReference type="PDB" id="7G4L">
    <property type="method" value="X-ray"/>
    <property type="resolution" value="1.71 A"/>
    <property type="chains" value="A=28-887"/>
</dbReference>
<dbReference type="PDB" id="7G4M">
    <property type="method" value="X-ray"/>
    <property type="resolution" value="2.08 A"/>
    <property type="chains" value="A=28-887"/>
</dbReference>
<dbReference type="PDB" id="7G4N">
    <property type="method" value="X-ray"/>
    <property type="resolution" value="1.67 A"/>
    <property type="chains" value="A=28-887"/>
</dbReference>
<dbReference type="PDB" id="7G4O">
    <property type="method" value="X-ray"/>
    <property type="resolution" value="1.64 A"/>
    <property type="chains" value="A=28-887"/>
</dbReference>
<dbReference type="PDB" id="7G4P">
    <property type="method" value="X-ray"/>
    <property type="resolution" value="2.12 A"/>
    <property type="chains" value="A=28-887"/>
</dbReference>
<dbReference type="PDB" id="7G4Q">
    <property type="method" value="X-ray"/>
    <property type="resolution" value="1.76 A"/>
    <property type="chains" value="A=28-887"/>
</dbReference>
<dbReference type="PDB" id="7G4R">
    <property type="method" value="X-ray"/>
    <property type="resolution" value="2.09 A"/>
    <property type="chains" value="A=28-887"/>
</dbReference>
<dbReference type="PDB" id="7G4S">
    <property type="method" value="X-ray"/>
    <property type="resolution" value="1.79 A"/>
    <property type="chains" value="A=28-887"/>
</dbReference>
<dbReference type="PDB" id="7G4T">
    <property type="method" value="X-ray"/>
    <property type="resolution" value="1.96 A"/>
    <property type="chains" value="A=28-887"/>
</dbReference>
<dbReference type="PDB" id="7G4U">
    <property type="method" value="X-ray"/>
    <property type="resolution" value="1.77 A"/>
    <property type="chains" value="A=28-887"/>
</dbReference>
<dbReference type="PDB" id="7G4V">
    <property type="method" value="X-ray"/>
    <property type="resolution" value="1.84 A"/>
    <property type="chains" value="A=28-887"/>
</dbReference>
<dbReference type="PDB" id="7G4W">
    <property type="method" value="X-ray"/>
    <property type="resolution" value="1.85 A"/>
    <property type="chains" value="A=28-887"/>
</dbReference>
<dbReference type="PDB" id="7G4X">
    <property type="method" value="X-ray"/>
    <property type="resolution" value="1.80 A"/>
    <property type="chains" value="A=28-887"/>
</dbReference>
<dbReference type="PDB" id="7G4Y">
    <property type="method" value="X-ray"/>
    <property type="resolution" value="1.88 A"/>
    <property type="chains" value="A=28-887"/>
</dbReference>
<dbReference type="PDB" id="7G4Z">
    <property type="method" value="X-ray"/>
    <property type="resolution" value="1.55 A"/>
    <property type="chains" value="A=28-887"/>
</dbReference>
<dbReference type="PDB" id="7G50">
    <property type="method" value="X-ray"/>
    <property type="resolution" value="2.04 A"/>
    <property type="chains" value="A=28-887"/>
</dbReference>
<dbReference type="PDB" id="7G51">
    <property type="method" value="X-ray"/>
    <property type="resolution" value="2.12 A"/>
    <property type="chains" value="A=28-887"/>
</dbReference>
<dbReference type="PDB" id="7G52">
    <property type="method" value="X-ray"/>
    <property type="resolution" value="1.71 A"/>
    <property type="chains" value="A=28-887"/>
</dbReference>
<dbReference type="PDB" id="7G53">
    <property type="method" value="X-ray"/>
    <property type="resolution" value="1.73 A"/>
    <property type="chains" value="A=28-887"/>
</dbReference>
<dbReference type="PDB" id="7G54">
    <property type="method" value="X-ray"/>
    <property type="resolution" value="2.38 A"/>
    <property type="chains" value="A=28-887"/>
</dbReference>
<dbReference type="PDB" id="7G55">
    <property type="method" value="X-ray"/>
    <property type="resolution" value="2.10 A"/>
    <property type="chains" value="A=28-887"/>
</dbReference>
<dbReference type="PDB" id="7G56">
    <property type="method" value="X-ray"/>
    <property type="resolution" value="1.90 A"/>
    <property type="chains" value="A=28-887"/>
</dbReference>
<dbReference type="PDB" id="7G57">
    <property type="method" value="X-ray"/>
    <property type="resolution" value="2.28 A"/>
    <property type="chains" value="A=28-887"/>
</dbReference>
<dbReference type="PDB" id="7G58">
    <property type="method" value="X-ray"/>
    <property type="resolution" value="1.91 A"/>
    <property type="chains" value="A=28-887"/>
</dbReference>
<dbReference type="PDB" id="7G59">
    <property type="method" value="X-ray"/>
    <property type="resolution" value="2.03 A"/>
    <property type="chains" value="A=28-887"/>
</dbReference>
<dbReference type="PDB" id="7G5A">
    <property type="method" value="X-ray"/>
    <property type="resolution" value="1.67 A"/>
    <property type="chains" value="A=28-887"/>
</dbReference>
<dbReference type="PDB" id="7G5B">
    <property type="method" value="X-ray"/>
    <property type="resolution" value="1.90 A"/>
    <property type="chains" value="A=28-887"/>
</dbReference>
<dbReference type="PDB" id="7G5C">
    <property type="method" value="X-ray"/>
    <property type="resolution" value="1.86 A"/>
    <property type="chains" value="A=28-887"/>
</dbReference>
<dbReference type="PDB" id="7G5D">
    <property type="method" value="X-ray"/>
    <property type="resolution" value="1.81 A"/>
    <property type="chains" value="A=28-887"/>
</dbReference>
<dbReference type="PDB" id="7G5E">
    <property type="method" value="X-ray"/>
    <property type="resolution" value="1.96 A"/>
    <property type="chains" value="A=28-887"/>
</dbReference>
<dbReference type="PDB" id="7G5F">
    <property type="method" value="X-ray"/>
    <property type="resolution" value="2.30 A"/>
    <property type="chains" value="A=28-887"/>
</dbReference>
<dbReference type="PDB" id="7G5G">
    <property type="method" value="X-ray"/>
    <property type="resolution" value="1.96 A"/>
    <property type="chains" value="A=28-887"/>
</dbReference>
<dbReference type="PDB" id="7G5H">
    <property type="method" value="X-ray"/>
    <property type="resolution" value="2.06 A"/>
    <property type="chains" value="A=28-887"/>
</dbReference>
<dbReference type="PDB" id="7G5I">
    <property type="method" value="X-ray"/>
    <property type="resolution" value="2.23 A"/>
    <property type="chains" value="A=28-887"/>
</dbReference>
<dbReference type="PDB" id="7G5J">
    <property type="method" value="X-ray"/>
    <property type="resolution" value="2.18 A"/>
    <property type="chains" value="A=28-887"/>
</dbReference>
<dbReference type="PDB" id="7G5K">
    <property type="method" value="X-ray"/>
    <property type="resolution" value="1.88 A"/>
    <property type="chains" value="A=28-887"/>
</dbReference>
<dbReference type="PDB" id="7G5L">
    <property type="method" value="X-ray"/>
    <property type="resolution" value="2.51 A"/>
    <property type="chains" value="A=28-887"/>
</dbReference>
<dbReference type="PDB" id="7G5M">
    <property type="method" value="X-ray"/>
    <property type="resolution" value="2.00 A"/>
    <property type="chains" value="A=28-887"/>
</dbReference>
<dbReference type="PDB" id="7G5N">
    <property type="method" value="X-ray"/>
    <property type="resolution" value="1.67 A"/>
    <property type="chains" value="A=28-887"/>
</dbReference>
<dbReference type="PDB" id="7G5O">
    <property type="method" value="X-ray"/>
    <property type="resolution" value="1.74 A"/>
    <property type="chains" value="A=28-887"/>
</dbReference>
<dbReference type="PDB" id="7G5P">
    <property type="method" value="X-ray"/>
    <property type="resolution" value="1.57 A"/>
    <property type="chains" value="A=28-887"/>
</dbReference>
<dbReference type="PDB" id="7G5Q">
    <property type="method" value="X-ray"/>
    <property type="resolution" value="1.64 A"/>
    <property type="chains" value="A=28-887"/>
</dbReference>
<dbReference type="PDB" id="7G5R">
    <property type="method" value="X-ray"/>
    <property type="resolution" value="2.10 A"/>
    <property type="chains" value="A=28-887"/>
</dbReference>
<dbReference type="PDB" id="7G5S">
    <property type="method" value="X-ray"/>
    <property type="resolution" value="2.06 A"/>
    <property type="chains" value="A=28-887"/>
</dbReference>
<dbReference type="PDB" id="7G5T">
    <property type="method" value="X-ray"/>
    <property type="resolution" value="1.93 A"/>
    <property type="chains" value="A=28-887"/>
</dbReference>
<dbReference type="PDB" id="7G5U">
    <property type="method" value="X-ray"/>
    <property type="resolution" value="2.06 A"/>
    <property type="chains" value="A=28-887"/>
</dbReference>
<dbReference type="PDB" id="7G5V">
    <property type="method" value="X-ray"/>
    <property type="resolution" value="2.15 A"/>
    <property type="chains" value="A=28-887"/>
</dbReference>
<dbReference type="PDB" id="7G5W">
    <property type="method" value="X-ray"/>
    <property type="resolution" value="1.96 A"/>
    <property type="chains" value="A=28-887"/>
</dbReference>
<dbReference type="PDB" id="7G5X">
    <property type="method" value="X-ray"/>
    <property type="resolution" value="1.91 A"/>
    <property type="chains" value="A=28-887"/>
</dbReference>
<dbReference type="PDB" id="7G5Y">
    <property type="method" value="X-ray"/>
    <property type="resolution" value="1.52 A"/>
    <property type="chains" value="A=28-887"/>
</dbReference>
<dbReference type="PDB" id="7G5Z">
    <property type="method" value="X-ray"/>
    <property type="resolution" value="1.44 A"/>
    <property type="chains" value="A=28-887"/>
</dbReference>
<dbReference type="PDB" id="7G60">
    <property type="method" value="X-ray"/>
    <property type="resolution" value="1.41 A"/>
    <property type="chains" value="A=28-887"/>
</dbReference>
<dbReference type="PDB" id="7G61">
    <property type="method" value="X-ray"/>
    <property type="resolution" value="1.83 A"/>
    <property type="chains" value="A=28-887"/>
</dbReference>
<dbReference type="PDB" id="7G62">
    <property type="method" value="X-ray"/>
    <property type="resolution" value="1.77 A"/>
    <property type="chains" value="A=28-887"/>
</dbReference>
<dbReference type="PDB" id="7G63">
    <property type="method" value="X-ray"/>
    <property type="resolution" value="2.08 A"/>
    <property type="chains" value="A=28-887"/>
</dbReference>
<dbReference type="PDB" id="7G64">
    <property type="method" value="X-ray"/>
    <property type="resolution" value="2.00 A"/>
    <property type="chains" value="A=28-887"/>
</dbReference>
<dbReference type="PDB" id="7G65">
    <property type="method" value="X-ray"/>
    <property type="resolution" value="1.73 A"/>
    <property type="chains" value="A=28-887"/>
</dbReference>
<dbReference type="PDB" id="7G66">
    <property type="method" value="X-ray"/>
    <property type="resolution" value="1.90 A"/>
    <property type="chains" value="A=28-887"/>
</dbReference>
<dbReference type="PDB" id="7G67">
    <property type="method" value="X-ray"/>
    <property type="resolution" value="1.97 A"/>
    <property type="chains" value="A=28-887"/>
</dbReference>
<dbReference type="PDB" id="7G68">
    <property type="method" value="X-ray"/>
    <property type="resolution" value="1.95 A"/>
    <property type="chains" value="A=28-887"/>
</dbReference>
<dbReference type="PDB" id="7G69">
    <property type="method" value="X-ray"/>
    <property type="resolution" value="1.61 A"/>
    <property type="chains" value="A=28-887"/>
</dbReference>
<dbReference type="PDB" id="7G6A">
    <property type="method" value="X-ray"/>
    <property type="resolution" value="1.63 A"/>
    <property type="chains" value="A=28-887"/>
</dbReference>
<dbReference type="PDB" id="7G6B">
    <property type="method" value="X-ray"/>
    <property type="resolution" value="1.61 A"/>
    <property type="chains" value="A=28-887"/>
</dbReference>
<dbReference type="PDB" id="7G6C">
    <property type="method" value="X-ray"/>
    <property type="resolution" value="2.49 A"/>
    <property type="chains" value="A=28-887"/>
</dbReference>
<dbReference type="PDB" id="7G6D">
    <property type="method" value="X-ray"/>
    <property type="resolution" value="1.73 A"/>
    <property type="chains" value="A=28-887"/>
</dbReference>
<dbReference type="PDB" id="7G6E">
    <property type="method" value="X-ray"/>
    <property type="resolution" value="1.79 A"/>
    <property type="chains" value="A=28-887"/>
</dbReference>
<dbReference type="PDB" id="7G6F">
    <property type="method" value="X-ray"/>
    <property type="resolution" value="1.90 A"/>
    <property type="chains" value="A=28-887"/>
</dbReference>
<dbReference type="PDB" id="7G6G">
    <property type="method" value="X-ray"/>
    <property type="resolution" value="1.79 A"/>
    <property type="chains" value="A=28-887"/>
</dbReference>
<dbReference type="PDB" id="7G6H">
    <property type="method" value="X-ray"/>
    <property type="resolution" value="1.90 A"/>
    <property type="chains" value="A=28-887"/>
</dbReference>
<dbReference type="PDB" id="7G6I">
    <property type="method" value="X-ray"/>
    <property type="resolution" value="1.83 A"/>
    <property type="chains" value="A=28-887"/>
</dbReference>
<dbReference type="PDB" id="7G6J">
    <property type="method" value="X-ray"/>
    <property type="resolution" value="1.82 A"/>
    <property type="chains" value="A=28-887"/>
</dbReference>
<dbReference type="PDB" id="7G6K">
    <property type="method" value="X-ray"/>
    <property type="resolution" value="2.29 A"/>
    <property type="chains" value="A=28-887"/>
</dbReference>
<dbReference type="PDB" id="7G6L">
    <property type="method" value="X-ray"/>
    <property type="resolution" value="1.49 A"/>
    <property type="chains" value="A=28-887"/>
</dbReference>
<dbReference type="PDB" id="7G6M">
    <property type="method" value="X-ray"/>
    <property type="resolution" value="2.13 A"/>
    <property type="chains" value="A=28-887"/>
</dbReference>
<dbReference type="PDB" id="7G6N">
    <property type="method" value="X-ray"/>
    <property type="resolution" value="1.81 A"/>
    <property type="chains" value="A=28-887"/>
</dbReference>
<dbReference type="PDB" id="7G6O">
    <property type="method" value="X-ray"/>
    <property type="resolution" value="2.19 A"/>
    <property type="chains" value="A=28-887"/>
</dbReference>
<dbReference type="PDB" id="7G6P">
    <property type="method" value="X-ray"/>
    <property type="resolution" value="1.88 A"/>
    <property type="chains" value="A=28-887"/>
</dbReference>
<dbReference type="PDB" id="7G6Q">
    <property type="method" value="X-ray"/>
    <property type="resolution" value="1.90 A"/>
    <property type="chains" value="A=28-887"/>
</dbReference>
<dbReference type="PDB" id="7G6R">
    <property type="method" value="X-ray"/>
    <property type="resolution" value="1.61 A"/>
    <property type="chains" value="A=28-887"/>
</dbReference>
<dbReference type="PDB" id="7G6S">
    <property type="method" value="X-ray"/>
    <property type="resolution" value="1.94 A"/>
    <property type="chains" value="A=28-887"/>
</dbReference>
<dbReference type="PDB" id="7G6T">
    <property type="method" value="X-ray"/>
    <property type="resolution" value="2.01 A"/>
    <property type="chains" value="A=28-887"/>
</dbReference>
<dbReference type="PDB" id="7G6U">
    <property type="method" value="X-ray"/>
    <property type="resolution" value="1.53 A"/>
    <property type="chains" value="A=28-887"/>
</dbReference>
<dbReference type="PDB" id="7G6V">
    <property type="method" value="X-ray"/>
    <property type="resolution" value="2.39 A"/>
    <property type="chains" value="A=28-887"/>
</dbReference>
<dbReference type="PDB" id="7G6W">
    <property type="method" value="X-ray"/>
    <property type="resolution" value="1.81 A"/>
    <property type="chains" value="A=28-887"/>
</dbReference>
<dbReference type="PDB" id="7G6X">
    <property type="method" value="X-ray"/>
    <property type="resolution" value="1.54 A"/>
    <property type="chains" value="A=28-887"/>
</dbReference>
<dbReference type="PDB" id="7G6Y">
    <property type="method" value="X-ray"/>
    <property type="resolution" value="1.48 A"/>
    <property type="chains" value="A=28-887"/>
</dbReference>
<dbReference type="PDB" id="7G6Z">
    <property type="method" value="X-ray"/>
    <property type="resolution" value="1.53 A"/>
    <property type="chains" value="A=28-887"/>
</dbReference>
<dbReference type="PDB" id="7G70">
    <property type="method" value="X-ray"/>
    <property type="resolution" value="1.79 A"/>
    <property type="chains" value="A=28-887"/>
</dbReference>
<dbReference type="PDB" id="7G71">
    <property type="method" value="X-ray"/>
    <property type="resolution" value="1.67 A"/>
    <property type="chains" value="A=28-887"/>
</dbReference>
<dbReference type="PDB" id="7G72">
    <property type="method" value="X-ray"/>
    <property type="resolution" value="2.05 A"/>
    <property type="chains" value="A=28-887"/>
</dbReference>
<dbReference type="PDB" id="7G73">
    <property type="method" value="X-ray"/>
    <property type="resolution" value="1.52 A"/>
    <property type="chains" value="A=28-887"/>
</dbReference>
<dbReference type="PDB" id="7G74">
    <property type="method" value="X-ray"/>
    <property type="resolution" value="1.82 A"/>
    <property type="chains" value="A=28-887"/>
</dbReference>
<dbReference type="PDB" id="7G75">
    <property type="method" value="X-ray"/>
    <property type="resolution" value="1.66 A"/>
    <property type="chains" value="A=28-887"/>
</dbReference>
<dbReference type="PDB" id="7G76">
    <property type="method" value="X-ray"/>
    <property type="resolution" value="1.50 A"/>
    <property type="chains" value="A=28-887"/>
</dbReference>
<dbReference type="PDB" id="7G77">
    <property type="method" value="X-ray"/>
    <property type="resolution" value="1.79 A"/>
    <property type="chains" value="A=28-887"/>
</dbReference>
<dbReference type="PDB" id="7G78">
    <property type="method" value="X-ray"/>
    <property type="resolution" value="1.91 A"/>
    <property type="chains" value="A=28-887"/>
</dbReference>
<dbReference type="PDB" id="7G79">
    <property type="method" value="X-ray"/>
    <property type="resolution" value="1.72 A"/>
    <property type="chains" value="A=28-887"/>
</dbReference>
<dbReference type="PDB" id="7G7A">
    <property type="method" value="X-ray"/>
    <property type="resolution" value="1.85 A"/>
    <property type="chains" value="A=28-887"/>
</dbReference>
<dbReference type="PDB" id="7G7B">
    <property type="method" value="X-ray"/>
    <property type="resolution" value="1.79 A"/>
    <property type="chains" value="A=28-887"/>
</dbReference>
<dbReference type="PDB" id="7G7C">
    <property type="method" value="X-ray"/>
    <property type="resolution" value="1.79 A"/>
    <property type="chains" value="A=28-887"/>
</dbReference>
<dbReference type="PDB" id="7G7D">
    <property type="method" value="X-ray"/>
    <property type="resolution" value="2.06 A"/>
    <property type="chains" value="A=28-887"/>
</dbReference>
<dbReference type="PDB" id="7G7E">
    <property type="method" value="X-ray"/>
    <property type="resolution" value="1.94 A"/>
    <property type="chains" value="A=28-887"/>
</dbReference>
<dbReference type="PDB" id="7G7F">
    <property type="method" value="X-ray"/>
    <property type="resolution" value="1.96 A"/>
    <property type="chains" value="A=28-887"/>
</dbReference>
<dbReference type="PDB" id="7G7G">
    <property type="method" value="X-ray"/>
    <property type="resolution" value="1.40 A"/>
    <property type="chains" value="A=28-887"/>
</dbReference>
<dbReference type="PDB" id="7G7H">
    <property type="method" value="X-ray"/>
    <property type="resolution" value="1.79 A"/>
    <property type="chains" value="A=28-887"/>
</dbReference>
<dbReference type="PDB" id="7G7I">
    <property type="method" value="X-ray"/>
    <property type="resolution" value="1.61 A"/>
    <property type="chains" value="A=28-887"/>
</dbReference>
<dbReference type="PDB" id="7G7J">
    <property type="method" value="X-ray"/>
    <property type="resolution" value="1.80 A"/>
    <property type="chains" value="A=28-887"/>
</dbReference>
<dbReference type="PDB" id="7G7K">
    <property type="method" value="X-ray"/>
    <property type="resolution" value="1.67 A"/>
    <property type="chains" value="A=28-887"/>
</dbReference>
<dbReference type="PDB" id="7G7L">
    <property type="method" value="X-ray"/>
    <property type="resolution" value="1.62 A"/>
    <property type="chains" value="A=28-887"/>
</dbReference>
<dbReference type="PDB" id="7G7M">
    <property type="method" value="X-ray"/>
    <property type="resolution" value="1.69 A"/>
    <property type="chains" value="A=28-887"/>
</dbReference>
<dbReference type="PDB" id="7G7N">
    <property type="method" value="X-ray"/>
    <property type="resolution" value="2.31 A"/>
    <property type="chains" value="A=28-887"/>
</dbReference>
<dbReference type="PDB" id="7G7O">
    <property type="method" value="X-ray"/>
    <property type="resolution" value="1.98 A"/>
    <property type="chains" value="A=28-887"/>
</dbReference>
<dbReference type="PDB" id="7G7P">
    <property type="method" value="X-ray"/>
    <property type="resolution" value="2.10 A"/>
    <property type="chains" value="A=28-887"/>
</dbReference>
<dbReference type="PDB" id="7G7Q">
    <property type="method" value="X-ray"/>
    <property type="resolution" value="2.02 A"/>
    <property type="chains" value="A=28-887"/>
</dbReference>
<dbReference type="PDB" id="7G7R">
    <property type="method" value="X-ray"/>
    <property type="resolution" value="2.01 A"/>
    <property type="chains" value="A=28-887"/>
</dbReference>
<dbReference type="PDB" id="7G7S">
    <property type="method" value="X-ray"/>
    <property type="resolution" value="1.85 A"/>
    <property type="chains" value="A=28-887"/>
</dbReference>
<dbReference type="PDB" id="7G7T">
    <property type="method" value="X-ray"/>
    <property type="resolution" value="1.79 A"/>
    <property type="chains" value="A=28-887"/>
</dbReference>
<dbReference type="PDB" id="7G7U">
    <property type="method" value="X-ray"/>
    <property type="resolution" value="1.93 A"/>
    <property type="chains" value="A=28-887"/>
</dbReference>
<dbReference type="PDB" id="7G7V">
    <property type="method" value="X-ray"/>
    <property type="resolution" value="1.62 A"/>
    <property type="chains" value="A=28-887"/>
</dbReference>
<dbReference type="PDB" id="7G7W">
    <property type="method" value="X-ray"/>
    <property type="resolution" value="1.61 A"/>
    <property type="chains" value="A=28-887"/>
</dbReference>
<dbReference type="PDB" id="7G7X">
    <property type="method" value="X-ray"/>
    <property type="resolution" value="1.54 A"/>
    <property type="chains" value="A=28-887"/>
</dbReference>
<dbReference type="PDB" id="7G7Y">
    <property type="method" value="X-ray"/>
    <property type="resolution" value="1.73 A"/>
    <property type="chains" value="A=28-887"/>
</dbReference>
<dbReference type="PDB" id="7G7Z">
    <property type="method" value="X-ray"/>
    <property type="resolution" value="1.79 A"/>
    <property type="chains" value="A=28-887"/>
</dbReference>
<dbReference type="PDB" id="7P0K">
    <property type="method" value="X-ray"/>
    <property type="resolution" value="2.20 A"/>
    <property type="chains" value="AAA=56-884"/>
</dbReference>
<dbReference type="PDB" id="7P4J">
    <property type="method" value="X-ray"/>
    <property type="resolution" value="1.79 A"/>
    <property type="chains" value="A=36-887"/>
</dbReference>
<dbReference type="PDB" id="7P4O">
    <property type="method" value="X-ray"/>
    <property type="resolution" value="1.69 A"/>
    <property type="chains" value="A=36-887"/>
</dbReference>
<dbReference type="PDB" id="7Z0N">
    <property type="method" value="X-ray"/>
    <property type="resolution" value="2.40 A"/>
    <property type="chains" value="AAA=56-885"/>
</dbReference>
<dbReference type="PDB" id="7Z3K">
    <property type="method" value="X-ray"/>
    <property type="resolution" value="2.00 A"/>
    <property type="chains" value="AAA=56-885"/>
</dbReference>
<dbReference type="PDB" id="7Z3L">
    <property type="method" value="X-ray"/>
    <property type="resolution" value="2.40 A"/>
    <property type="chains" value="AAA=56-885"/>
</dbReference>
<dbReference type="PDB" id="8C4W">
    <property type="method" value="X-ray"/>
    <property type="resolution" value="1.95 A"/>
    <property type="chains" value="A=1-887"/>
</dbReference>
<dbReference type="PDB" id="8C7R">
    <property type="method" value="X-ray"/>
    <property type="resolution" value="2.53 A"/>
    <property type="chains" value="A=1-887"/>
</dbReference>
<dbReference type="PDB" id="9ENT">
    <property type="method" value="X-ray"/>
    <property type="resolution" value="2.20 A"/>
    <property type="chains" value="A=1-887"/>
</dbReference>
<dbReference type="PDB" id="9EU5">
    <property type="method" value="X-ray"/>
    <property type="resolution" value="3.00 A"/>
    <property type="chains" value="A=1-887"/>
</dbReference>
<dbReference type="PDBsum" id="2XR9"/>
<dbReference type="PDBsum" id="2XRG"/>
<dbReference type="PDBsum" id="5DLT"/>
<dbReference type="PDBsum" id="5DLV"/>
<dbReference type="PDBsum" id="5DLW"/>
<dbReference type="PDBsum" id="5IJQ"/>
<dbReference type="PDBsum" id="5IJS"/>
<dbReference type="PDBsum" id="5L0B"/>
<dbReference type="PDBsum" id="5L0E"/>
<dbReference type="PDBsum" id="5L0K"/>
<dbReference type="PDBsum" id="5LQQ"/>
<dbReference type="PDBsum" id="5M0D"/>
<dbReference type="PDBsum" id="5M0E"/>
<dbReference type="PDBsum" id="5M0M"/>
<dbReference type="PDBsum" id="5M0S"/>
<dbReference type="PDBsum" id="5S9L"/>
<dbReference type="PDBsum" id="5S9M"/>
<dbReference type="PDBsum" id="5S9N"/>
<dbReference type="PDBsum" id="7G2E"/>
<dbReference type="PDBsum" id="7G2F"/>
<dbReference type="PDBsum" id="7G2G"/>
<dbReference type="PDBsum" id="7G2H"/>
<dbReference type="PDBsum" id="7G2I"/>
<dbReference type="PDBsum" id="7G2J"/>
<dbReference type="PDBsum" id="7G2K"/>
<dbReference type="PDBsum" id="7G2L"/>
<dbReference type="PDBsum" id="7G2M"/>
<dbReference type="PDBsum" id="7G2N"/>
<dbReference type="PDBsum" id="7G2O"/>
<dbReference type="PDBsum" id="7G2P"/>
<dbReference type="PDBsum" id="7G2Q"/>
<dbReference type="PDBsum" id="7G2R"/>
<dbReference type="PDBsum" id="7G2S"/>
<dbReference type="PDBsum" id="7G2T"/>
<dbReference type="PDBsum" id="7G2U"/>
<dbReference type="PDBsum" id="7G2V"/>
<dbReference type="PDBsum" id="7G2W"/>
<dbReference type="PDBsum" id="7G2X"/>
<dbReference type="PDBsum" id="7G2Y"/>
<dbReference type="PDBsum" id="7G2Z"/>
<dbReference type="PDBsum" id="7G30"/>
<dbReference type="PDBsum" id="7G31"/>
<dbReference type="PDBsum" id="7G32"/>
<dbReference type="PDBsum" id="7G33"/>
<dbReference type="PDBsum" id="7G34"/>
<dbReference type="PDBsum" id="7G35"/>
<dbReference type="PDBsum" id="7G36"/>
<dbReference type="PDBsum" id="7G37"/>
<dbReference type="PDBsum" id="7G38"/>
<dbReference type="PDBsum" id="7G39"/>
<dbReference type="PDBsum" id="7G3A"/>
<dbReference type="PDBsum" id="7G3B"/>
<dbReference type="PDBsum" id="7G3C"/>
<dbReference type="PDBsum" id="7G3D"/>
<dbReference type="PDBsum" id="7G3E"/>
<dbReference type="PDBsum" id="7G3F"/>
<dbReference type="PDBsum" id="7G3G"/>
<dbReference type="PDBsum" id="7G3H"/>
<dbReference type="PDBsum" id="7G3I"/>
<dbReference type="PDBsum" id="7G3J"/>
<dbReference type="PDBsum" id="7G3K"/>
<dbReference type="PDBsum" id="7G3L"/>
<dbReference type="PDBsum" id="7G3M"/>
<dbReference type="PDBsum" id="7G3N"/>
<dbReference type="PDBsum" id="7G3O"/>
<dbReference type="PDBsum" id="7G3P"/>
<dbReference type="PDBsum" id="7G3Q"/>
<dbReference type="PDBsum" id="7G3R"/>
<dbReference type="PDBsum" id="7G3S"/>
<dbReference type="PDBsum" id="7G3T"/>
<dbReference type="PDBsum" id="7G3U"/>
<dbReference type="PDBsum" id="7G3V"/>
<dbReference type="PDBsum" id="7G3W"/>
<dbReference type="PDBsum" id="7G3X"/>
<dbReference type="PDBsum" id="7G3Y"/>
<dbReference type="PDBsum" id="7G3Z"/>
<dbReference type="PDBsum" id="7G40"/>
<dbReference type="PDBsum" id="7G41"/>
<dbReference type="PDBsum" id="7G42"/>
<dbReference type="PDBsum" id="7G43"/>
<dbReference type="PDBsum" id="7G44"/>
<dbReference type="PDBsum" id="7G45"/>
<dbReference type="PDBsum" id="7G46"/>
<dbReference type="PDBsum" id="7G47"/>
<dbReference type="PDBsum" id="7G48"/>
<dbReference type="PDBsum" id="7G49"/>
<dbReference type="PDBsum" id="7G4A"/>
<dbReference type="PDBsum" id="7G4B"/>
<dbReference type="PDBsum" id="7G4C"/>
<dbReference type="PDBsum" id="7G4D"/>
<dbReference type="PDBsum" id="7G4E"/>
<dbReference type="PDBsum" id="7G4F"/>
<dbReference type="PDBsum" id="7G4G"/>
<dbReference type="PDBsum" id="7G4H"/>
<dbReference type="PDBsum" id="7G4I"/>
<dbReference type="PDBsum" id="7G4J"/>
<dbReference type="PDBsum" id="7G4K"/>
<dbReference type="PDBsum" id="7G4L"/>
<dbReference type="PDBsum" id="7G4M"/>
<dbReference type="PDBsum" id="7G4N"/>
<dbReference type="PDBsum" id="7G4O"/>
<dbReference type="PDBsum" id="7G4P"/>
<dbReference type="PDBsum" id="7G4Q"/>
<dbReference type="PDBsum" id="7G4R"/>
<dbReference type="PDBsum" id="7G4S"/>
<dbReference type="PDBsum" id="7G4T"/>
<dbReference type="PDBsum" id="7G4U"/>
<dbReference type="PDBsum" id="7G4V"/>
<dbReference type="PDBsum" id="7G4W"/>
<dbReference type="PDBsum" id="7G4X"/>
<dbReference type="PDBsum" id="7G4Y"/>
<dbReference type="PDBsum" id="7G4Z"/>
<dbReference type="PDBsum" id="7G50"/>
<dbReference type="PDBsum" id="7G51"/>
<dbReference type="PDBsum" id="7G52"/>
<dbReference type="PDBsum" id="7G53"/>
<dbReference type="PDBsum" id="7G54"/>
<dbReference type="PDBsum" id="7G55"/>
<dbReference type="PDBsum" id="7G56"/>
<dbReference type="PDBsum" id="7G57"/>
<dbReference type="PDBsum" id="7G58"/>
<dbReference type="PDBsum" id="7G59"/>
<dbReference type="PDBsum" id="7G5A"/>
<dbReference type="PDBsum" id="7G5B"/>
<dbReference type="PDBsum" id="7G5C"/>
<dbReference type="PDBsum" id="7G5D"/>
<dbReference type="PDBsum" id="7G5E"/>
<dbReference type="PDBsum" id="7G5F"/>
<dbReference type="PDBsum" id="7G5G"/>
<dbReference type="PDBsum" id="7G5H"/>
<dbReference type="PDBsum" id="7G5I"/>
<dbReference type="PDBsum" id="7G5J"/>
<dbReference type="PDBsum" id="7G5K"/>
<dbReference type="PDBsum" id="7G5L"/>
<dbReference type="PDBsum" id="7G5M"/>
<dbReference type="PDBsum" id="7G5N"/>
<dbReference type="PDBsum" id="7G5O"/>
<dbReference type="PDBsum" id="7G5P"/>
<dbReference type="PDBsum" id="7G5Q"/>
<dbReference type="PDBsum" id="7G5R"/>
<dbReference type="PDBsum" id="7G5S"/>
<dbReference type="PDBsum" id="7G5T"/>
<dbReference type="PDBsum" id="7G5U"/>
<dbReference type="PDBsum" id="7G5V"/>
<dbReference type="PDBsum" id="7G5W"/>
<dbReference type="PDBsum" id="7G5X"/>
<dbReference type="PDBsum" id="7G5Y"/>
<dbReference type="PDBsum" id="7G5Z"/>
<dbReference type="PDBsum" id="7G60"/>
<dbReference type="PDBsum" id="7G61"/>
<dbReference type="PDBsum" id="7G62"/>
<dbReference type="PDBsum" id="7G63"/>
<dbReference type="PDBsum" id="7G64"/>
<dbReference type="PDBsum" id="7G65"/>
<dbReference type="PDBsum" id="7G66"/>
<dbReference type="PDBsum" id="7G67"/>
<dbReference type="PDBsum" id="7G68"/>
<dbReference type="PDBsum" id="7G69"/>
<dbReference type="PDBsum" id="7G6A"/>
<dbReference type="PDBsum" id="7G6B"/>
<dbReference type="PDBsum" id="7G6C"/>
<dbReference type="PDBsum" id="7G6D"/>
<dbReference type="PDBsum" id="7G6E"/>
<dbReference type="PDBsum" id="7G6F"/>
<dbReference type="PDBsum" id="7G6G"/>
<dbReference type="PDBsum" id="7G6H"/>
<dbReference type="PDBsum" id="7G6I"/>
<dbReference type="PDBsum" id="7G6J"/>
<dbReference type="PDBsum" id="7G6K"/>
<dbReference type="PDBsum" id="7G6L"/>
<dbReference type="PDBsum" id="7G6M"/>
<dbReference type="PDBsum" id="7G6N"/>
<dbReference type="PDBsum" id="7G6O"/>
<dbReference type="PDBsum" id="7G6P"/>
<dbReference type="PDBsum" id="7G6Q"/>
<dbReference type="PDBsum" id="7G6R"/>
<dbReference type="PDBsum" id="7G6S"/>
<dbReference type="PDBsum" id="7G6T"/>
<dbReference type="PDBsum" id="7G6U"/>
<dbReference type="PDBsum" id="7G6V"/>
<dbReference type="PDBsum" id="7G6W"/>
<dbReference type="PDBsum" id="7G6X"/>
<dbReference type="PDBsum" id="7G6Y"/>
<dbReference type="PDBsum" id="7G6Z"/>
<dbReference type="PDBsum" id="7G70"/>
<dbReference type="PDBsum" id="7G71"/>
<dbReference type="PDBsum" id="7G72"/>
<dbReference type="PDBsum" id="7G73"/>
<dbReference type="PDBsum" id="7G74"/>
<dbReference type="PDBsum" id="7G75"/>
<dbReference type="PDBsum" id="7G76"/>
<dbReference type="PDBsum" id="7G77"/>
<dbReference type="PDBsum" id="7G78"/>
<dbReference type="PDBsum" id="7G79"/>
<dbReference type="PDBsum" id="7G7A"/>
<dbReference type="PDBsum" id="7G7B"/>
<dbReference type="PDBsum" id="7G7C"/>
<dbReference type="PDBsum" id="7G7D"/>
<dbReference type="PDBsum" id="7G7E"/>
<dbReference type="PDBsum" id="7G7F"/>
<dbReference type="PDBsum" id="7G7G"/>
<dbReference type="PDBsum" id="7G7H"/>
<dbReference type="PDBsum" id="7G7I"/>
<dbReference type="PDBsum" id="7G7J"/>
<dbReference type="PDBsum" id="7G7K"/>
<dbReference type="PDBsum" id="7G7L"/>
<dbReference type="PDBsum" id="7G7M"/>
<dbReference type="PDBsum" id="7G7N"/>
<dbReference type="PDBsum" id="7G7O"/>
<dbReference type="PDBsum" id="7G7P"/>
<dbReference type="PDBsum" id="7G7Q"/>
<dbReference type="PDBsum" id="7G7R"/>
<dbReference type="PDBsum" id="7G7S"/>
<dbReference type="PDBsum" id="7G7T"/>
<dbReference type="PDBsum" id="7G7U"/>
<dbReference type="PDBsum" id="7G7V"/>
<dbReference type="PDBsum" id="7G7W"/>
<dbReference type="PDBsum" id="7G7X"/>
<dbReference type="PDBsum" id="7G7Y"/>
<dbReference type="PDBsum" id="7G7Z"/>
<dbReference type="PDBsum" id="7P0K"/>
<dbReference type="PDBsum" id="7P4J"/>
<dbReference type="PDBsum" id="7P4O"/>
<dbReference type="PDBsum" id="7Z0N"/>
<dbReference type="PDBsum" id="7Z3K"/>
<dbReference type="PDBsum" id="7Z3L"/>
<dbReference type="PDBsum" id="8C4W"/>
<dbReference type="PDBsum" id="8C7R"/>
<dbReference type="PDBsum" id="9ENT"/>
<dbReference type="PDBsum" id="9EU5"/>
<dbReference type="SMR" id="Q64610"/>
<dbReference type="FunCoup" id="Q64610">
    <property type="interactions" value="330"/>
</dbReference>
<dbReference type="STRING" id="10116.ENSRNOP00000047118"/>
<dbReference type="BindingDB" id="Q64610"/>
<dbReference type="ChEMBL" id="CHEMBL3826870"/>
<dbReference type="GuidetoPHARMACOLOGY" id="2901"/>
<dbReference type="SwissLipids" id="SLP:000000394"/>
<dbReference type="GlyCosmos" id="Q64610">
    <property type="glycosylation" value="6 sites, No reported glycans"/>
</dbReference>
<dbReference type="GlyGen" id="Q64610">
    <property type="glycosylation" value="6 sites"/>
</dbReference>
<dbReference type="iPTMnet" id="Q64610"/>
<dbReference type="PhosphoSitePlus" id="Q64610"/>
<dbReference type="Ensembl" id="ENSRNOT00000101657.1">
    <molecule id="Q64610-1"/>
    <property type="protein sequence ID" value="ENSRNOP00000076476.1"/>
    <property type="gene ID" value="ENSRNOG00000004089.8"/>
</dbReference>
<dbReference type="GeneID" id="84050"/>
<dbReference type="KEGG" id="rno:84050"/>
<dbReference type="UCSC" id="RGD:69298">
    <molecule id="Q64610-1"/>
    <property type="organism name" value="rat"/>
</dbReference>
<dbReference type="AGR" id="RGD:69298"/>
<dbReference type="CTD" id="5168"/>
<dbReference type="RGD" id="69298">
    <property type="gene designation" value="Enpp2"/>
</dbReference>
<dbReference type="GeneTree" id="ENSGT00940000155778"/>
<dbReference type="InParanoid" id="Q64610"/>
<dbReference type="PhylomeDB" id="Q64610"/>
<dbReference type="BRENDA" id="3.1.4.39">
    <property type="organism ID" value="5301"/>
</dbReference>
<dbReference type="SABIO-RK" id="Q64610"/>
<dbReference type="EvolutionaryTrace" id="Q64610"/>
<dbReference type="PRO" id="PR:Q64610"/>
<dbReference type="Proteomes" id="UP000002494">
    <property type="component" value="Chromosome 7"/>
</dbReference>
<dbReference type="GO" id="GO:0005615">
    <property type="term" value="C:extracellular space"/>
    <property type="evidence" value="ECO:0000314"/>
    <property type="project" value="UniProtKB"/>
</dbReference>
<dbReference type="GO" id="GO:0016020">
    <property type="term" value="C:membrane"/>
    <property type="evidence" value="ECO:0007669"/>
    <property type="project" value="GOC"/>
</dbReference>
<dbReference type="GO" id="GO:0047391">
    <property type="term" value="F:alkylglycerophosphoethanolamine phosphodiesterase activity"/>
    <property type="evidence" value="ECO:0000314"/>
    <property type="project" value="RGD"/>
</dbReference>
<dbReference type="GO" id="GO:0005509">
    <property type="term" value="F:calcium ion binding"/>
    <property type="evidence" value="ECO:0000314"/>
    <property type="project" value="UniProtKB"/>
</dbReference>
<dbReference type="GO" id="GO:0004622">
    <property type="term" value="F:lysophospholipase activity"/>
    <property type="evidence" value="ECO:0000314"/>
    <property type="project" value="UniProtKB"/>
</dbReference>
<dbReference type="GO" id="GO:0003676">
    <property type="term" value="F:nucleic acid binding"/>
    <property type="evidence" value="ECO:0007669"/>
    <property type="project" value="InterPro"/>
</dbReference>
<dbReference type="GO" id="GO:0004528">
    <property type="term" value="F:phosphodiesterase I activity"/>
    <property type="evidence" value="ECO:0000315"/>
    <property type="project" value="RGD"/>
</dbReference>
<dbReference type="GO" id="GO:0004630">
    <property type="term" value="F:phospholipase D activity"/>
    <property type="evidence" value="ECO:0007669"/>
    <property type="project" value="RHEA"/>
</dbReference>
<dbReference type="GO" id="GO:0030247">
    <property type="term" value="F:polysaccharide binding"/>
    <property type="evidence" value="ECO:0007669"/>
    <property type="project" value="InterPro"/>
</dbReference>
<dbReference type="GO" id="GO:0005044">
    <property type="term" value="F:scavenger receptor activity"/>
    <property type="evidence" value="ECO:0007669"/>
    <property type="project" value="InterPro"/>
</dbReference>
<dbReference type="GO" id="GO:0008270">
    <property type="term" value="F:zinc ion binding"/>
    <property type="evidence" value="ECO:0000314"/>
    <property type="project" value="UniProtKB"/>
</dbReference>
<dbReference type="GO" id="GO:0060326">
    <property type="term" value="P:cell chemotaxis"/>
    <property type="evidence" value="ECO:0000315"/>
    <property type="project" value="RGD"/>
</dbReference>
<dbReference type="GO" id="GO:0071276">
    <property type="term" value="P:cellular response to cadmium ion"/>
    <property type="evidence" value="ECO:0000270"/>
    <property type="project" value="RGD"/>
</dbReference>
<dbReference type="GO" id="GO:0071392">
    <property type="term" value="P:cellular response to estradiol stimulus"/>
    <property type="evidence" value="ECO:0000270"/>
    <property type="project" value="RGD"/>
</dbReference>
<dbReference type="GO" id="GO:0044849">
    <property type="term" value="P:estrous cycle"/>
    <property type="evidence" value="ECO:0000270"/>
    <property type="project" value="RGD"/>
</dbReference>
<dbReference type="GO" id="GO:0006955">
    <property type="term" value="P:immune response"/>
    <property type="evidence" value="ECO:0007669"/>
    <property type="project" value="InterPro"/>
</dbReference>
<dbReference type="GO" id="GO:0001953">
    <property type="term" value="P:negative regulation of cell-matrix adhesion"/>
    <property type="evidence" value="ECO:0000314"/>
    <property type="project" value="RGD"/>
</dbReference>
<dbReference type="GO" id="GO:0034638">
    <property type="term" value="P:phosphatidylcholine catabolic process"/>
    <property type="evidence" value="ECO:0000314"/>
    <property type="project" value="UniProtKB"/>
</dbReference>
<dbReference type="GO" id="GO:0009395">
    <property type="term" value="P:phospholipid catabolic process"/>
    <property type="evidence" value="ECO:0000266"/>
    <property type="project" value="RGD"/>
</dbReference>
<dbReference type="GO" id="GO:0006644">
    <property type="term" value="P:phospholipid metabolic process"/>
    <property type="evidence" value="ECO:0000266"/>
    <property type="project" value="RGD"/>
</dbReference>
<dbReference type="GO" id="GO:0008284">
    <property type="term" value="P:positive regulation of cell population proliferation"/>
    <property type="evidence" value="ECO:0000314"/>
    <property type="project" value="RGD"/>
</dbReference>
<dbReference type="GO" id="GO:0010634">
    <property type="term" value="P:positive regulation of epithelial cell migration"/>
    <property type="evidence" value="ECO:0000266"/>
    <property type="project" value="RGD"/>
</dbReference>
<dbReference type="GO" id="GO:0051894">
    <property type="term" value="P:positive regulation of focal adhesion assembly"/>
    <property type="evidence" value="ECO:0000314"/>
    <property type="project" value="RGD"/>
</dbReference>
<dbReference type="GO" id="GO:2000394">
    <property type="term" value="P:positive regulation of lamellipodium morphogenesis"/>
    <property type="evidence" value="ECO:0000266"/>
    <property type="project" value="RGD"/>
</dbReference>
<dbReference type="GO" id="GO:0048714">
    <property type="term" value="P:positive regulation of oligodendrocyte differentiation"/>
    <property type="evidence" value="ECO:0000314"/>
    <property type="project" value="RGD"/>
</dbReference>
<dbReference type="GO" id="GO:1900026">
    <property type="term" value="P:positive regulation of substrate adhesion-dependent cell spreading"/>
    <property type="evidence" value="ECO:0000314"/>
    <property type="project" value="RGD"/>
</dbReference>
<dbReference type="GO" id="GO:0030334">
    <property type="term" value="P:regulation of cell migration"/>
    <property type="evidence" value="ECO:0000266"/>
    <property type="project" value="RGD"/>
</dbReference>
<dbReference type="GO" id="GO:1903165">
    <property type="term" value="P:response to polycyclic arene"/>
    <property type="evidence" value="ECO:0000270"/>
    <property type="project" value="RGD"/>
</dbReference>
<dbReference type="GO" id="GO:0030149">
    <property type="term" value="P:sphingolipid catabolic process"/>
    <property type="evidence" value="ECO:0000250"/>
    <property type="project" value="UniProtKB"/>
</dbReference>
<dbReference type="CDD" id="cd16018">
    <property type="entry name" value="Enpp"/>
    <property type="match status" value="1"/>
</dbReference>
<dbReference type="CDD" id="cd00091">
    <property type="entry name" value="NUC"/>
    <property type="match status" value="1"/>
</dbReference>
<dbReference type="FunFam" id="3.40.570.10:FF:000001">
    <property type="entry name" value="Ectonucleotide pyrophosphatase/phosphodiesterase family member 2"/>
    <property type="match status" value="1"/>
</dbReference>
<dbReference type="FunFam" id="3.40.720.10:FF:000006">
    <property type="entry name" value="Ectonucleotide pyrophosphatase/phosphodiesterase family member 2"/>
    <property type="match status" value="1"/>
</dbReference>
<dbReference type="FunFam" id="4.10.410.20:FF:000001">
    <property type="entry name" value="Ectonucleotide pyrophosphatase/phosphodiesterase family member 2"/>
    <property type="match status" value="1"/>
</dbReference>
<dbReference type="FunFam" id="4.10.410.20:FF:000002">
    <property type="entry name" value="Ectonucleotide pyrophosphatase/phosphodiesterase family member 2"/>
    <property type="match status" value="1"/>
</dbReference>
<dbReference type="Gene3D" id="4.10.410.20">
    <property type="match status" value="2"/>
</dbReference>
<dbReference type="Gene3D" id="3.40.720.10">
    <property type="entry name" value="Alkaline Phosphatase, subunit A"/>
    <property type="match status" value="1"/>
</dbReference>
<dbReference type="Gene3D" id="3.40.570.10">
    <property type="entry name" value="Extracellular Endonuclease, subunit A"/>
    <property type="match status" value="1"/>
</dbReference>
<dbReference type="InterPro" id="IPR017850">
    <property type="entry name" value="Alkaline_phosphatase_core_sf"/>
</dbReference>
<dbReference type="InterPro" id="IPR044929">
    <property type="entry name" value="DNA/RNA_non-sp_Endonuclease_sf"/>
</dbReference>
<dbReference type="InterPro" id="IPR001604">
    <property type="entry name" value="Endo_G_ENPP1-like_dom"/>
</dbReference>
<dbReference type="InterPro" id="IPR020821">
    <property type="entry name" value="ENPP1-3/EXOG-like_nuc-like"/>
</dbReference>
<dbReference type="InterPro" id="IPR044925">
    <property type="entry name" value="His-Me_finger_sf"/>
</dbReference>
<dbReference type="InterPro" id="IPR002591">
    <property type="entry name" value="Phosphodiest/P_Trfase"/>
</dbReference>
<dbReference type="InterPro" id="IPR020436">
    <property type="entry name" value="SMB_chordata"/>
</dbReference>
<dbReference type="InterPro" id="IPR036024">
    <property type="entry name" value="Somatomedin_B-like_dom_sf"/>
</dbReference>
<dbReference type="InterPro" id="IPR001212">
    <property type="entry name" value="Somatomedin_B_dom"/>
</dbReference>
<dbReference type="PANTHER" id="PTHR10151">
    <property type="entry name" value="ECTONUCLEOTIDE PYROPHOSPHATASE/PHOSPHODIESTERASE"/>
    <property type="match status" value="1"/>
</dbReference>
<dbReference type="PANTHER" id="PTHR10151:SF21">
    <property type="entry name" value="ECTONUCLEOTIDE PYROPHOSPHATASE_PHOSPHODIESTERASE FAMILY MEMBER 2"/>
    <property type="match status" value="1"/>
</dbReference>
<dbReference type="Pfam" id="PF01223">
    <property type="entry name" value="Endonuclease_NS"/>
    <property type="match status" value="1"/>
</dbReference>
<dbReference type="Pfam" id="PF01663">
    <property type="entry name" value="Phosphodiest"/>
    <property type="match status" value="1"/>
</dbReference>
<dbReference type="Pfam" id="PF01033">
    <property type="entry name" value="Somatomedin_B"/>
    <property type="match status" value="2"/>
</dbReference>
<dbReference type="PRINTS" id="PR00022">
    <property type="entry name" value="SOMATOMEDINB"/>
</dbReference>
<dbReference type="SMART" id="SM00892">
    <property type="entry name" value="Endonuclease_NS"/>
    <property type="match status" value="1"/>
</dbReference>
<dbReference type="SMART" id="SM00477">
    <property type="entry name" value="NUC"/>
    <property type="match status" value="1"/>
</dbReference>
<dbReference type="SMART" id="SM00201">
    <property type="entry name" value="SO"/>
    <property type="match status" value="2"/>
</dbReference>
<dbReference type="SUPFAM" id="SSF53649">
    <property type="entry name" value="Alkaline phosphatase-like"/>
    <property type="match status" value="1"/>
</dbReference>
<dbReference type="SUPFAM" id="SSF54060">
    <property type="entry name" value="His-Me finger endonucleases"/>
    <property type="match status" value="1"/>
</dbReference>
<dbReference type="SUPFAM" id="SSF90188">
    <property type="entry name" value="Somatomedin B domain"/>
    <property type="match status" value="2"/>
</dbReference>
<dbReference type="PROSITE" id="PS00524">
    <property type="entry name" value="SMB_1"/>
    <property type="match status" value="2"/>
</dbReference>
<dbReference type="PROSITE" id="PS50958">
    <property type="entry name" value="SMB_2"/>
    <property type="match status" value="2"/>
</dbReference>
<evidence type="ECO:0000250" key="1">
    <source>
        <dbReference type="UniProtKB" id="Q13822"/>
    </source>
</evidence>
<evidence type="ECO:0000250" key="2">
    <source>
        <dbReference type="UniProtKB" id="Q9R1E6"/>
    </source>
</evidence>
<evidence type="ECO:0000255" key="3"/>
<evidence type="ECO:0000255" key="4">
    <source>
        <dbReference type="PROSITE-ProRule" id="PRU00350"/>
    </source>
</evidence>
<evidence type="ECO:0000256" key="5">
    <source>
        <dbReference type="SAM" id="MobiDB-lite"/>
    </source>
</evidence>
<evidence type="ECO:0000269" key="6">
    <source>
    </source>
</evidence>
<evidence type="ECO:0000269" key="7">
    <source>
    </source>
</evidence>
<evidence type="ECO:0000269" key="8">
    <source>
    </source>
</evidence>
<evidence type="ECO:0000269" key="9">
    <source>
    </source>
</evidence>
<evidence type="ECO:0000269" key="10">
    <source>
    </source>
</evidence>
<evidence type="ECO:0000269" key="11">
    <source>
    </source>
</evidence>
<evidence type="ECO:0000269" key="12">
    <source>
    </source>
</evidence>
<evidence type="ECO:0000269" key="13">
    <source>
    </source>
</evidence>
<evidence type="ECO:0000269" key="14">
    <source>
    </source>
</evidence>
<evidence type="ECO:0000269" key="15">
    <source>
    </source>
</evidence>
<evidence type="ECO:0000269" key="16">
    <source>
    </source>
</evidence>
<evidence type="ECO:0000269" key="17">
    <source>
    </source>
</evidence>
<evidence type="ECO:0000303" key="18">
    <source>
    </source>
</evidence>
<evidence type="ECO:0000303" key="19">
    <source>
    </source>
</evidence>
<evidence type="ECO:0000303" key="20">
    <source>
    </source>
</evidence>
<evidence type="ECO:0000305" key="21"/>
<evidence type="ECO:0000305" key="22">
    <source>
    </source>
</evidence>
<evidence type="ECO:0000305" key="23">
    <source>
    </source>
</evidence>
<evidence type="ECO:0000312" key="24">
    <source>
        <dbReference type="RGD" id="69298"/>
    </source>
</evidence>
<evidence type="ECO:0007744" key="25">
    <source>
        <dbReference type="PDB" id="2XR9"/>
    </source>
</evidence>
<evidence type="ECO:0007744" key="26">
    <source>
        <dbReference type="PDB" id="2XRG"/>
    </source>
</evidence>
<evidence type="ECO:0007744" key="27">
    <source>
        <dbReference type="PDB" id="5DLT"/>
    </source>
</evidence>
<evidence type="ECO:0007744" key="28">
    <source>
        <dbReference type="PDB" id="5DLV"/>
    </source>
</evidence>
<evidence type="ECO:0007744" key="29">
    <source>
        <dbReference type="PDB" id="5DLW"/>
    </source>
</evidence>
<evidence type="ECO:0007744" key="30">
    <source>
        <dbReference type="PDB" id="5IJQ"/>
    </source>
</evidence>
<evidence type="ECO:0007744" key="31">
    <source>
        <dbReference type="PDB" id="5IJS"/>
    </source>
</evidence>
<evidence type="ECO:0007744" key="32">
    <source>
        <dbReference type="PDB" id="5L0B"/>
    </source>
</evidence>
<evidence type="ECO:0007744" key="33">
    <source>
        <dbReference type="PDB" id="5L0E"/>
    </source>
</evidence>
<evidence type="ECO:0007744" key="34">
    <source>
        <dbReference type="PDB" id="5L0K"/>
    </source>
</evidence>
<evidence type="ECO:0007744" key="35">
    <source>
        <dbReference type="PDB" id="5LQQ"/>
    </source>
</evidence>
<evidence type="ECO:0007829" key="36">
    <source>
        <dbReference type="PDB" id="5DLT"/>
    </source>
</evidence>
<evidence type="ECO:0007829" key="37">
    <source>
        <dbReference type="PDB" id="5L0B"/>
    </source>
</evidence>
<evidence type="ECO:0007829" key="38">
    <source>
        <dbReference type="PDB" id="5L0K"/>
    </source>
</evidence>
<evidence type="ECO:0007829" key="39">
    <source>
        <dbReference type="PDB" id="5S9M"/>
    </source>
</evidence>
<evidence type="ECO:0007829" key="40">
    <source>
        <dbReference type="PDB" id="7P4J"/>
    </source>
</evidence>
<evidence type="ECO:0007829" key="41">
    <source>
        <dbReference type="PDB" id="7P4O"/>
    </source>
</evidence>
<evidence type="ECO:0007829" key="42">
    <source>
        <dbReference type="PDB" id="8C4W"/>
    </source>
</evidence>
<accession>Q64610</accession>
<accession>Q66HQ0</accession>
<keyword id="KW-0002">3D-structure</keyword>
<keyword id="KW-0025">Alternative splicing</keyword>
<keyword id="KW-0106">Calcium</keyword>
<keyword id="KW-0145">Chemotaxis</keyword>
<keyword id="KW-0165">Cleavage on pair of basic residues</keyword>
<keyword id="KW-0903">Direct protein sequencing</keyword>
<keyword id="KW-1015">Disulfide bond</keyword>
<keyword id="KW-0325">Glycoprotein</keyword>
<keyword id="KW-0378">Hydrolase</keyword>
<keyword id="KW-0442">Lipid degradation</keyword>
<keyword id="KW-0443">Lipid metabolism</keyword>
<keyword id="KW-0479">Metal-binding</keyword>
<keyword id="KW-0550">Obesity</keyword>
<keyword id="KW-1185">Reference proteome</keyword>
<keyword id="KW-0677">Repeat</keyword>
<keyword id="KW-0964">Secreted</keyword>
<keyword id="KW-0732">Signal</keyword>
<keyword id="KW-0862">Zinc</keyword>
<gene>
    <name evidence="24" type="primary">Enpp2</name>
    <name type="synonym">Atx</name>
    <name type="synonym">Npps2</name>
</gene>